<accession>Q9WTL8</accession>
<accession>O88295</accession>
<accession>Q921S4</accession>
<accession>Q9R0U2</accession>
<accession>Q9WTL9</accession>
<comment type="function">
    <text evidence="1 8 15 16 21 22 23 26 31 32 33 34 35 36 38 41 43 44 45 47 48 50 51 53 56 58 59 60 61 63 64 66 67 68 69 70 71 72 75 78 82 83">Transcriptional activator which forms a core component of the circadian clock. The circadian clock, an internal time-keeping system, regulates various physiological processes through the generation of approximately 24 hour circadian rhythms in gene expression, which are translated into rhythms in metabolism and behavior. It is derived from the Latin roots 'circa' (about) and 'diem' (day) and acts as an important regulator of a wide array of physiological functions including metabolism, sleep, body temperature, blood pressure, endocrine, immune, cardiovascular, and renal function. Consists of two major components: the central clock, residing in the suprachiasmatic nucleus (SCN) of the brain, and the peripheral clocks that are present in nearly every tissue and organ system. Both the central and peripheral clocks can be reset by environmental cues, also known as Zeitgebers (German for 'timegivers'). The predominant Zeitgeber for the central clock is light, which is sensed by retina and signals directly to the SCN. The central clock entrains the peripheral clocks through neuronal and hormonal signals, body temperature and feeding-related cues, aligning all clocks with the external light/dark cycle. Circadian rhythms allow an organism to achieve temporal homeostasis with its environment at the molecular level by regulating gene expression to create a peak of protein expression once every 24 hours to control when a particular physiological process is most active with respect to the solar day. Transcription and translation of core clock components (CLOCK, NPAS2, BMAL1, BMAL2, PER1, PER2, PER3, CRY1 and CRY2) plays a critical role in rhythm generation, whereas delays imposed by post-translational modifications (PTMs) are important for determining the period (tau) of the rhythms (tau refers to the period of a rhythm and is the length, in time, of one complete cycle). A diurnal rhythm is synchronized with the day/night cycle, while the ultradian and infradian rhythms have a period shorter and longer than 24 hours, respectively. Disruptions in the circadian rhythms contribute to the pathology of cardiovascular diseases, cancer, metabolic syndromes and aging. A transcription/translation feedback loop (TTFL) forms the core of the molecular circadian clock mechanism. Transcription factors, CLOCK or NPAS2 and BMAL1 or BMAL2, form the positive limb of the feedback loop, act in the form of a heterodimer and activate the transcription of core clock genes and clock-controlled genes (involved in key metabolic processes), harboring E-box elements (5'-CACGTG-3') within their promoters. The core clock genes: PER1/2/3 and CRY1/2 which are transcriptional repressors form the negative limb of the feedback loop and interact with the CLOCK|NPAS2-BMAL1|BMAL2 heterodimer inhibiting its activity and thereby negatively regulating their own expression. This heterodimer also activates nuclear receptors NR1D1/2 and RORA/B/G, which form a second feedback loop and which activate and repress BMAL1 transcription, respectively. BMAL1 positively regulates myogenesis and negatively regulates adipogenesis via the transcriptional control of the genes of the canonical Wnt signaling pathway. Plays a role in normal pancreatic beta-cell function; regulates glucose-stimulated insulin secretion via the regulation of antioxidant genes NFE2L2/NRF2 and its targets SESN2, PRDX3, CCLC and CCLM. Negatively regulates the mTORC1 signaling pathway; regulates the expression of MTOR and DEPTOR. Controls diurnal oscillations of Ly6C inflammatory monocytes; rhythmic recruitment of the PRC2 complex imparts diurnal variation to chemokine expression that is necessary to sustain Ly6C monocyte rhythms. Regulates the expression of HSD3B2, STAR, PTGS2, CYP11A1, CYP19A1 and LHCGR in the ovary and also the genes involved in hair growth. Plays an important role in adult hippocampal neurogenesis by regulating the timely entry of neural stem/progenitor cells (NSPCs) into the cell cycle and the number of cell divisions that take place prior to cell-cycle exit. Regulates the circadian expression of CIART and KLF11. The CLOCK-BMAL1 heterodimer regulates the circadian expression of SERPINE1/PAI1, VWF, B3, CCRN4L/NOC, NAMPT, DBP, MYOD1, PPARGC1A, PPARGC1B, SIRT1, GYS2, F7, NGFR, GNRHR, BHLHE40/DEC1, ATF4, MTA1, KLF10 and also genes implicated in glucose and lipid metabolism. Promotes rhythmic chromatin opening, regulating the DNA accessibility of other transcription factors. May play a role in spermatogenesis; contributes to the chromatoid body assembly and physiology. The NPAS2-BMAL1 heterodimer positively regulates the expression of MAOA, F7 and LDHA and modulates the circadian rhythm of daytime contrast sensitivity by regulating the rhythmic expression of adenylate cyclase type 1 (ADCY1) in the retina. The preferred binding motif for the CLOCK-BMAL1 heterodimer is 5'-CACGTGA-3', which contains a flanking adenine nucleotide at the 3-prime end of the canonical 6-nucleotide E-box sequence (By similarity). CLOCK specifically binds to the half-site 5'-CAC-3', while BMAL1 binds to the half-site 5'-GTGA-3' (By similarity). The CLOCK-BMAL1 heterodimer also recognizes the non-canonical E-box motifs 5'-AACGTGA-3' and 5'-CATGTGA-3' (By similarity). Essential for the rhythmic interaction of CLOCK with ASS1 and plays a critical role in positively regulating CLOCK-mediated acetylation of ASS1 (PubMed:28985504). Plays a role in protecting against lethal sepsis by limiting the expression of immune checkpoint protein CD274 in macrophages in a PKM2-dependent manner (PubMed:29996098). Regulates the diurnal rhythms of skeletal muscle metabolism via transcriptional activation of genes promoting triglyceride synthesis (DGAT2) and metabolic efficiency (COQ10B) (PubMed:30096135).</text>
</comment>
<comment type="activity regulation">
    <text evidence="1">The redox state of the cell can modulate the transcriptional activity of the CLOCK-BMAL1 and NPAS2-BMAL1 heterodimers; NADH and NADPH enhance the DNA-binding activity of the heterodimers.</text>
</comment>
<comment type="subunit">
    <text evidence="1 6 10 11 13 17 18 19 20 23 24 26 27 28 29 30 36 37 39 40 42 46 48 49 50 52 54 61 62 64 65 69 73 75 76 77 80 85">Component of the circadian clock oscillator which includes the CRY1/2 proteins, CLOCK or NPAS2, BMAL1 or BMAL2, CSNK1D and/or CSNK1E, TIMELESS and the PER1/2/3 proteins (PubMed:11779462). Forms a heterodimer with CLOCK (PubMed:16717091, PubMed:16980631, PubMed:18662546, PubMed:19330005, PubMed:19946213, PubMed:21613214, PubMed:22653727, PubMed:23970558, PubMed:9616112). The CLOCK-BMAL1 heterodimer is required for E-box-dependent transactivation, for CLOCK nuclear translocation and degradation, and, for phosphorylation of both CLOCK and BMAL1 (PubMed:11779462). Part of a nuclear complex which also includes RACK1 and PRKCA; RACK1 and PRKCA are recruited to the complex in a circadian manner (PubMed:20093473). Interacts with NPAS2 (PubMed:16628007). Interacts with EZH2 (PubMed:16717091, PubMed:23970558). Interacts with SUMO3 (PubMed:18644859). Interacts with SIRT1 (PubMed:18662546, PubMed:18662547, PubMed:19299583). Interacts with AHR (PubMed:20106950). Interacts with ID1, ID2 and ID3 (PubMed:20861012). Interacts with DDX4 (PubMed:22900038). Interacts with OGT (PubMed:23337503). Interacts with EED and SUZ12 (PubMed:23970558). Interacts with MTA1 (PubMed:24089055). Interacts with CIART (PubMed:24385426, PubMed:24736997). Interacts with HSP90 (By similarity). Interacts with KAT2B and EP300 (By similarity). Interacts with BHLHE40/DEC1 and BHLHE41/DEC2 (PubMed:12397359). Interacts with RELB and the interaction is enhanced in the presence of CLOCK (PubMed:22894897). Interacts with PER1, PER2, CRY1 and CRY2 and this interaction requires a translocation to the nucleus (PubMed:18430226, PubMed:19605937, PubMed:20840750, PubMed:21613214, PubMed:24154698). Interaction of the CLOCK-BMAL1 heterodimer with PER or CRY inhibits transcription activation (PubMed:21613214). Interaction of the CLOCK-BMAL1 with CRY1 is independent of DNA but with PER2 is off DNA (PubMed:21613214). The CLOCK-BMAL1 heterodimer interacts with GSK3B (PubMed:19946213, PubMed:20049328). Interacts with KDM5A (PubMed:21960634). Interacts with KMT2A; in a circadian manner (PubMed:21113167). Interacts with UBE3A (By similarity). Interacts with PRKCG (PubMed:23185022). Interacts with MAGEL2 (PubMed:22208286). Interacts with NCOA2 (PubMed:24529706). Interacts with THRAP3 (PubMed:24043798). The CLOCK-BMAL1 heterodimer interacts with PASD1 (By similarity). Interacts with PASD1 (By similarity). Interacts with USP9X (PubMed:29626158). Interacts with PIWIL2 (via PIWI domain) (PubMed:28903391). Interacts with HDAC3 (PubMed:26776516). Interacts with HNF4A (By similarity).</text>
</comment>
<comment type="interaction">
    <interactant intactId="EBI-644534">
        <id>Q9WTL8</id>
    </interactant>
    <interactant intactId="EBI-16101489">
        <id>Q3TQ03</id>
        <label>Ciart</label>
    </interactant>
    <organismsDiffer>false</organismsDiffer>
    <experiments>3</experiments>
</comment>
<comment type="interaction">
    <interactant intactId="EBI-644534">
        <id>Q9WTL8</id>
    </interactant>
    <interactant intactId="EBI-79859">
        <id>O08785</id>
        <label>Clock</label>
    </interactant>
    <organismsDiffer>false</organismsDiffer>
    <experiments>39</experiments>
</comment>
<comment type="interaction">
    <interactant intactId="EBI-644534">
        <id>Q9WTL8</id>
    </interactant>
    <interactant intactId="EBI-1266607">
        <id>P97784</id>
        <label>Cry1</label>
    </interactant>
    <organismsDiffer>false</organismsDiffer>
    <experiments>23</experiments>
</comment>
<comment type="interaction">
    <interactant intactId="EBI-644534">
        <id>Q9WTL8</id>
    </interactant>
    <interactant intactId="EBI-1794634">
        <id>Q99JJ1</id>
        <label>Cry2</label>
    </interactant>
    <organismsDiffer>false</organismsDiffer>
    <experiments>4</experiments>
</comment>
<comment type="interaction">
    <interactant intactId="EBI-644534">
        <id>Q9WTL8</id>
    </interactant>
    <interactant intactId="EBI-1266619">
        <id>Q9R194</id>
        <label>Cry2</label>
    </interactant>
    <organismsDiffer>false</organismsDiffer>
    <experiments>12</experiments>
</comment>
<comment type="interaction">
    <interactant intactId="EBI-644534">
        <id>Q9WTL8</id>
    </interactant>
    <interactant intactId="EBI-771698">
        <id>Q60737</id>
        <label>Csnk2a1</label>
    </interactant>
    <organismsDiffer>false</organismsDiffer>
    <experiments>5</experiments>
</comment>
<comment type="interaction">
    <interactant intactId="EBI-644534">
        <id>Q9WTL8</id>
    </interactant>
    <interactant intactId="EBI-348179">
        <id>P67871</id>
        <label>Csnk2b</label>
    </interactant>
    <organismsDiffer>false</organismsDiffer>
    <experiments>8</experiments>
</comment>
<comment type="interaction">
    <interactant intactId="EBI-644534">
        <id>Q9WTL8</id>
    </interactant>
    <interactant intactId="EBI-642213">
        <id>P11103</id>
        <label>Parp1</label>
    </interactant>
    <organismsDiffer>false</organismsDiffer>
    <experiments>7</experiments>
</comment>
<comment type="interaction">
    <interactant intactId="EBI-644534">
        <id>Q9WTL8</id>
    </interactant>
    <interactant intactId="EBI-1266779">
        <id>O54943</id>
        <label>Per2</label>
    </interactant>
    <organismsDiffer>false</organismsDiffer>
    <experiments>9</experiments>
</comment>
<comment type="interaction">
    <interactant intactId="EBI-644534">
        <id>Q9WTL8</id>
    </interactant>
    <interactant intactId="EBI-357187">
        <id>P62137</id>
        <label>Ppp1ca</label>
    </interactant>
    <organismsDiffer>false</organismsDiffer>
    <experiments>2</experiments>
</comment>
<comment type="interaction">
    <interactant intactId="EBI-644534">
        <id>Q9WTL8</id>
    </interactant>
    <interactant intactId="EBI-10265133">
        <id>Q8N365</id>
        <label>CIART</label>
    </interactant>
    <organismsDiffer>true</organismsDiffer>
    <experiments>6</experiments>
</comment>
<comment type="interaction">
    <interactant intactId="EBI-644534">
        <id>Q9WTL8</id>
    </interactant>
    <interactant intactId="EBI-348169">
        <id>P67870</id>
        <label>CSNK2B</label>
    </interactant>
    <organismsDiffer>true</organismsDiffer>
    <experiments>4</experiments>
</comment>
<comment type="interaction">
    <interactant intactId="EBI-644534">
        <id>Q9WTL8</id>
    </interactant>
    <interactant intactId="EBI-591370">
        <id>Q03164</id>
        <label>KMT2A</label>
    </interactant>
    <organismsDiffer>true</organismsDiffer>
    <experiments>3</experiments>
</comment>
<comment type="interaction">
    <interactant intactId="EBI-644534">
        <id>Q9WTL8</id>
    </interactant>
    <interactant intactId="EBI-3908771">
        <id>P51449</id>
        <label>RORC</label>
    </interactant>
    <organismsDiffer>true</organismsDiffer>
    <experiments>2</experiments>
</comment>
<comment type="interaction">
    <interactant intactId="EBI-644534">
        <id>Q9WTL8</id>
    </interactant>
    <interactant intactId="EBI-540834">
        <id>P61964</id>
        <label>WDR5</label>
    </interactant>
    <organismsDiffer>true</organismsDiffer>
    <experiments>2</experiments>
</comment>
<comment type="interaction">
    <interactant intactId="EBI-644559">
        <id>Q9WTL8-2</id>
    </interactant>
    <interactant intactId="EBI-79859">
        <id>O08785</id>
        <label>Clock</label>
    </interactant>
    <organismsDiffer>false</organismsDiffer>
    <experiments>2</experiments>
</comment>
<comment type="interaction">
    <interactant intactId="EBI-644559">
        <id>Q9WTL8-2</id>
    </interactant>
    <interactant intactId="EBI-1266607">
        <id>P97784</id>
        <label>Cry1</label>
    </interactant>
    <organismsDiffer>false</organismsDiffer>
    <experiments>4</experiments>
</comment>
<comment type="interaction">
    <interactant intactId="EBI-644568">
        <id>Q9WTL8-4</id>
    </interactant>
    <interactant intactId="EBI-79859">
        <id>O08785</id>
        <label>Clock</label>
    </interactant>
    <organismsDiffer>false</organismsDiffer>
    <experiments>10</experiments>
</comment>
<comment type="interaction">
    <interactant intactId="EBI-644568">
        <id>Q9WTL8-4</id>
    </interactant>
    <interactant intactId="EBI-296306">
        <id>P45481</id>
        <label>Crebbp</label>
    </interactant>
    <organismsDiffer>false</organismsDiffer>
    <experiments>2</experiments>
</comment>
<comment type="interaction">
    <interactant intactId="EBI-644568">
        <id>Q9WTL8-4</id>
    </interactant>
    <interactant intactId="EBI-1266607">
        <id>P97784</id>
        <label>Cry1</label>
    </interactant>
    <organismsDiffer>false</organismsDiffer>
    <experiments>4</experiments>
</comment>
<comment type="subcellular location">
    <subcellularLocation>
        <location evidence="13 46 76">Nucleus</location>
    </subcellularLocation>
    <subcellularLocation>
        <location evidence="13">Cytoplasm</location>
    </subcellularLocation>
    <subcellularLocation>
        <location evidence="18">Nucleus</location>
        <location evidence="18">PML body</location>
    </subcellularLocation>
    <text evidence="13 18 37">Shuttles between the nucleus and the cytoplasm and this nucleocytoplasmic shuttling is essential for the nuclear accumulation of CLOCK, target gene transcription and the degradation of the CLOCK-BMAL1 heterodimer. The sumoylated form localizes in the PML body. Sequestered to the cytoplasm in the presence of ID2.</text>
</comment>
<comment type="alternative products">
    <event type="alternative splicing"/>
    <isoform>
        <id>Q9WTL8-1</id>
        <name>1</name>
        <name>b'</name>
        <sequence type="displayed"/>
    </isoform>
    <isoform>
        <id>Q9WTL8-2</id>
        <name>2</name>
        <name>b</name>
        <sequence type="described" ref="VSP_007992"/>
    </isoform>
    <isoform>
        <id>Q9WTL8-3</id>
        <name>3</name>
        <sequence type="described" ref="VSP_007993 VSP_007994"/>
    </isoform>
    <isoform>
        <id>Q9WTL8-4</id>
        <name>4</name>
        <sequence type="described" ref="VSP_007992 VSP_007994"/>
    </isoform>
    <isoform>
        <id>Q9WTL8-5</id>
        <name>5</name>
        <name>g'</name>
        <sequence type="described" ref="VSP_007992 VSP_007995 VSP_007996"/>
    </isoform>
</comment>
<comment type="tissue specificity">
    <text evidence="12 50 57 65 74 77 79">Expressed in liver and testis (at protein level). Expressed in the suprachiasmatic nucleus (SCN) in a circadian manner (PubMed:29138967).</text>
</comment>
<comment type="induction">
    <text evidence="12 32 57 74">Expressed in a circadian manner in the liver.</text>
</comment>
<comment type="PTM">
    <text evidence="13 18 52 76 80">Ubiquitinated, leading to its proteasomal degradation (PubMed:16980631, PubMed:18644859, PubMed:23185022, PubMed:26776516). Deubiquitinated by USP9X (PubMed:29626158).</text>
</comment>
<comment type="PTM">
    <text evidence="54 55">O-glycosylated; contains O-GlcNAc. O-glycosylation by OGT prevents protein degradation by inhibiting ubiquitination. It also stabilizes the CLOCK-BMAL1 heterodimer thereby increasing CLOCK-BMAL1-mediated transcription of genes in the negative loop of the circadian clock such as PER1/2/3 and CRY1/2.</text>
</comment>
<comment type="PTM">
    <text evidence="14 20 84">Acetylated on Lys-544 by CLOCK during the repression phase of the circadian cycle (PubMed:18075593, PubMed:31294688). Acetylation facilitates recruitment of CRY1 protein and initiates the repression phase of the circadian cycle (PubMed:18075593). Acetylated at Lys-544 by KAT5 during the activation phase of the cycle, leading to recruitment of the positive transcription elongation factor b (P-TEFb) and BRD4, followed by productive elongation of circadian transcripts (PubMed:31294688). Deacetylated by SIRT1, which may result in decreased protein stability (PubMed:18662547).</text>
</comment>
<comment type="PTM">
    <text evidence="1 5 7 24 25 27 28">Phosphorylated upon dimerization with CLOCK. Phosphorylation enhances the transcriptional activity, alters the subcellular localization and decreases the stability of the CLOCK-BMAL1 heterodimer by promoting its degradation. Phosphorylation shows circadian variations in the liver with a peak between CT10 to CT14. Phosphorylation at Ser-97 by CK2 is essential for its nuclear localization, its interaction with CLOCK and controls CLOCK nuclear entry. Dephosphorylation at Ser-85 is important for dimerization with CLOCK and transcriptional activity (By similarity).</text>
</comment>
<comment type="PTM">
    <text evidence="9 18">Sumoylated on Lys-266 upon dimerization with CLOCK. Predominantly conjugated to poly-SUMO2/3 rather than SUMO1 and the level of these conjugates undergo rhythmic variation, peaking at CT9-CT12. Sumoylation localizes it exclusively to the PML body and promotes its ubiquitination in the PML body, ubiquitin-dependent proteasomal degradation and the transcriptional activity of the CLOCK-BMAL1 heterodimer.</text>
</comment>
<comment type="PTM">
    <text evidence="81">Undergoes lysosome-mediated degradation in a time-dependent manner in the liver.</text>
</comment>
<comment type="disruption phenotype">
    <text evidence="15 45 67 72 82 83">Mice are characterized by reduced lifespan, and the presence of a number of pathologies characteristic of pre-mature aging and increased oxidative stress. They show impaired functional connectivity, increased oxidative damage and severe astrogliosis in the brain. They also exhibit accelerated thrombosis with elevated levels of thrombogenic factors, including VWF, SERPINE1/PAI1, and fibrinogen. Both male and female mice are infertile and male mice have low testosterone and high luteinizing hormone serum levels and a significant decrease in sperm count (PubMed:18258755, PubMed:22101268, PubMed:24270424, PubMed:24481314). Conditional knockout in myeloid cells increases the risk of sepsis lethality which is associated with elevated lactate production and CD274 expression in macrophages (PubMed:29996098). Myeloid-cell-specific BMAL1 and PKM2 double knockout reduces the risk of sepsis lethality which is associated with reduced serum lactate levels and reduced CD274 expression in macrophages (PubMed:29996098). Conditional knockout in skeletal muscle leads to impaired skeletal muscle triglyceride biosynthesis, accumulation of bioactive lipids and amino acids and reduced mitochondrial efficiency (PubMed:30096135).</text>
</comment>
<gene>
    <name type="primary">Bmal1</name>
    <name evidence="90" type="synonym">Arntl</name>
</gene>
<reference key="1">
    <citation type="journal article" date="1999" name="Biochem. Biophys. Res. Commun.">
        <title>Characterization of three splice variants and genomic organization of the mouse BMAL1 gene.</title>
        <authorList>
            <person name="Yu W."/>
            <person name="Ikeda M."/>
            <person name="Abe H."/>
            <person name="Honma S."/>
            <person name="Ebisawa T."/>
            <person name="Yamauchi T."/>
            <person name="Honma K."/>
            <person name="Nomura M."/>
        </authorList>
    </citation>
    <scope>NUCLEOTIDE SEQUENCE [MRNA] (ISOFORMS 1; 2 AND 5)</scope>
    <source>
        <tissue>Brain</tissue>
    </source>
</reference>
<reference key="2">
    <citation type="journal article" date="1998" name="Biochem. Biophys. Res. Commun.">
        <title>Transcriptionally active heterodimer formation of an Arnt-like PAS protein, Arnt3, with HIF-1a, HLF, and clock.</title>
        <authorList>
            <person name="Takahata S."/>
            <person name="Sogawa K."/>
            <person name="Kobayashi A."/>
            <person name="Ema M."/>
            <person name="Mimura J."/>
            <person name="Ozaki N."/>
            <person name="Fujii-Kuriyama Y."/>
        </authorList>
    </citation>
    <scope>NUCLEOTIDE SEQUENCE [MRNA] (ISOFORM 4)</scope>
</reference>
<reference key="3">
    <citation type="journal article" date="2004" name="Genome Res.">
        <title>The status, quality, and expansion of the NIH full-length cDNA project: the Mammalian Gene Collection (MGC).</title>
        <authorList>
            <consortium name="The MGC Project Team"/>
        </authorList>
    </citation>
    <scope>NUCLEOTIDE SEQUENCE [LARGE SCALE MRNA] (ISOFORMS 3 AND 4)</scope>
</reference>
<reference key="4">
    <citation type="journal article" date="1998" name="Science">
        <title>Role of the CLOCK protein in the mammalian circadian mechanism.</title>
        <authorList>
            <person name="Gekakis N."/>
            <person name="Staknis D."/>
            <person name="Nguyen H.B."/>
            <person name="Davis F.C."/>
            <person name="Wilsbacher L.D."/>
            <person name="King D.P."/>
            <person name="Takahashi J.S."/>
            <person name="Weitz C.J."/>
        </authorList>
    </citation>
    <scope>INTERACTION WITH CLOCK</scope>
</reference>
<reference key="5">
    <citation type="journal article" date="2001" name="Cell">
        <title>Posttranslational mechanisms regulate the mammalian circadian clock.</title>
        <authorList>
            <person name="Lee C."/>
            <person name="Etchegaray J.-P."/>
            <person name="Cagampang F.R.A."/>
            <person name="Loudon A.S.I."/>
            <person name="Reppert S.M."/>
        </authorList>
    </citation>
    <scope>IDENTIFICATION IN A COMPLEX WITH CLOCK; PER1; PER2; CRY1; CRY2; CSNK1D AND CSNK1E</scope>
    <scope>PHOSPHORYLATION</scope>
    <scope>SUBCELLULAR LOCATION</scope>
</reference>
<reference key="6">
    <citation type="journal article" date="2002" name="Nature">
        <title>Dec1 and Dec2 are regulators of the mammalian molecular clock.</title>
        <authorList>
            <person name="Honma S."/>
            <person name="Kawamoto T."/>
            <person name="Takagi Y."/>
            <person name="Fujimoto K."/>
            <person name="Sato F."/>
            <person name="Noshiro M."/>
            <person name="Kato Y."/>
            <person name="Honma K.I."/>
        </authorList>
    </citation>
    <scope>INTERACTION WITH BHLHE40 AND BHLHE41</scope>
</reference>
<reference key="7">
    <citation type="journal article" date="2003" name="Genes Dev.">
        <title>BMAL1-dependent circadian oscillation of nuclear CLOCK: posttranslational events induced by dimerization of transcriptional activators of the mammalian clock system.</title>
        <authorList>
            <person name="Kondratov R.V."/>
            <person name="Chernov M.V."/>
            <person name="Kondratova A.A."/>
            <person name="Gorbacheva V.Y."/>
            <person name="Gudkov A.V."/>
            <person name="Antoch M.P."/>
        </authorList>
    </citation>
    <scope>PHOSPHORYLATION</scope>
    <scope>SUBCELLULAR LOCATION</scope>
</reference>
<reference key="8">
    <citation type="journal article" date="2004" name="Biochem. Biophys. Res. Commun.">
        <title>A novel autofeedback loop of Dec1 transcription involved in circadian rhythm regulation.</title>
        <authorList>
            <person name="Kawamoto T."/>
            <person name="Noshiro M."/>
            <person name="Sato F."/>
            <person name="Maemura K."/>
            <person name="Takeda N."/>
            <person name="Nagai R."/>
            <person name="Iwata T."/>
            <person name="Fujimoto K."/>
            <person name="Furukawa M."/>
            <person name="Miyazaki K."/>
            <person name="Honma S."/>
            <person name="Honma K.I."/>
            <person name="Kato Y."/>
        </authorList>
    </citation>
    <scope>FUNCTION</scope>
</reference>
<reference key="9">
    <citation type="journal article" date="2005" name="Science">
        <title>Circadian clock control by SUMOylation of BMAL1.</title>
        <authorList>
            <person name="Cardone L."/>
            <person name="Hirayama J."/>
            <person name="Giordano F."/>
            <person name="Tamaru T."/>
            <person name="Palvimo J.J."/>
            <person name="Sassone-Corsi P."/>
        </authorList>
    </citation>
    <scope>SUMOYLATION AT LYS-266</scope>
    <scope>MUTAGENESIS OF LYS-230; LYS-236; LYS-266 AND LYS-279</scope>
</reference>
<reference key="10">
    <citation type="journal article" date="2006" name="Cell Cycle">
        <title>Post-translational regulation of circadian transcriptional CLOCK(NPAS2)/BMAL1 complex by CRYPTOCHROMES.</title>
        <authorList>
            <person name="Kondratov R.V."/>
            <person name="Kondratova A.A."/>
            <person name="Lee C."/>
            <person name="Gorbacheva V.Y."/>
            <person name="Chernov M.V."/>
            <person name="Antoch M.P."/>
        </authorList>
    </citation>
    <scope>INTERACTION WITH NPAS2</scope>
</reference>
<reference key="11">
    <citation type="journal article" date="2006" name="J. Biol. Chem.">
        <title>The polycomb group protein EZH2 is required for mammalian circadian clock function.</title>
        <authorList>
            <person name="Etchegaray J.P."/>
            <person name="Yang X."/>
            <person name="DeBruyne J.P."/>
            <person name="Peters A.H."/>
            <person name="Weaver D.R."/>
            <person name="Jenuwein T."/>
            <person name="Reppert S.M."/>
        </authorList>
    </citation>
    <scope>INTERACTION WITH EZH2; CLOCK; PER1; PER2; CRY1 AND CRY2</scope>
</reference>
<reference key="12">
    <citation type="journal article" date="2006" name="Mol. Cell. Biol.">
        <title>BMAL1 shuttling controls transactivation and degradation of the CLOCK/BMAL1 heterodimer.</title>
        <authorList>
            <person name="Kwon I."/>
            <person name="Lee J."/>
            <person name="Chang S.H."/>
            <person name="Jung N.C."/>
            <person name="Lee B.J."/>
            <person name="Son G.H."/>
            <person name="Kim K."/>
            <person name="Lee K.H."/>
        </authorList>
    </citation>
    <scope>SUBCELLULAR LOCATION</scope>
    <scope>NUCLEAR LOCALIZATION SIGNAL</scope>
    <scope>NUCLEAR EXPORT SIGNAL</scope>
    <scope>INTERACTION WITH CLOCK</scope>
    <scope>MUTAGENESIS OF 38-LYS-ARG-39; LEU-154; LEU-157; LEU-370 AND LEU-374</scope>
    <scope>UBIQUITINATION</scope>
    <scope>PROTEASOMAL DEGRADATION</scope>
</reference>
<reference key="13">
    <citation type="journal article" date="2006" name="Proc. Natl. Acad. Sci. U.S.A.">
        <title>Posttranslational regulation of the mammalian circadian clock by cryptochrome and protein phosphatase 5.</title>
        <authorList>
            <person name="Partch C.L."/>
            <person name="Shields K.F."/>
            <person name="Thompson C.L."/>
            <person name="Selby C.P."/>
            <person name="Sancar A."/>
        </authorList>
    </citation>
    <scope>TISSUE SPECIFICITY</scope>
    <scope>INDUCTION</scope>
</reference>
<reference key="14">
    <citation type="journal article" date="2007" name="Nature">
        <title>CLOCK-mediated acetylation of BMAL1 controls circadian function.</title>
        <authorList>
            <person name="Hirayama J."/>
            <person name="Sahar S."/>
            <person name="Grimaldi B."/>
            <person name="Tamaru T."/>
            <person name="Takamatsu K."/>
            <person name="Nakahata Y."/>
            <person name="Sassone-Corsi P."/>
        </authorList>
    </citation>
    <scope>ACETYLATION AT LYS-544</scope>
</reference>
<reference key="15">
    <citation type="journal article" date="2008" name="BMC Mol. Biol.">
        <title>Interaction of circadian clock proteins PER2 and CRY with BMAL1 and CLOCK.</title>
        <authorList>
            <person name="Langmesser S."/>
            <person name="Tallone T."/>
            <person name="Bordon A."/>
            <person name="Rusconi S."/>
            <person name="Albrecht U."/>
        </authorList>
    </citation>
    <scope>INTERACTION WITH CRY1; CRY2 AND PER2</scope>
</reference>
<reference key="16">
    <citation type="journal article" date="2008" name="Cell">
        <title>SIRT1 regulates circadian clock gene expression through PER2 deacetylation.</title>
        <authorList>
            <person name="Asher G."/>
            <person name="Gatfield D."/>
            <person name="Stratmann M."/>
            <person name="Reinke H."/>
            <person name="Dibner C."/>
            <person name="Kreppel F."/>
            <person name="Mostoslavsky R."/>
            <person name="Alt F.W."/>
            <person name="Schibler U."/>
        </authorList>
    </citation>
    <scope>INTERACTION WITH SIRT1 AND CLOCK</scope>
</reference>
<reference key="17">
    <citation type="journal article" date="2008" name="Cell">
        <title>The NAD+-dependent deacetylase SIRT1 modulates CLOCK-mediated chromatin remodeling and circadian control.</title>
        <authorList>
            <person name="Nakahata Y."/>
            <person name="Kaluzova M."/>
            <person name="Grimaldi B."/>
            <person name="Sahar S."/>
            <person name="Hirayama J."/>
            <person name="Chen D."/>
            <person name="Guarente L.P."/>
            <person name="Sassone-Corsi P."/>
        </authorList>
    </citation>
    <scope>ACETYLATION AT LYS-544</scope>
    <scope>DEACETYLATION</scope>
    <scope>INTERACTION WITH SIRT1</scope>
</reference>
<reference key="18">
    <citation type="journal article" date="2008" name="J. Biol. Rhythms">
        <title>The circadian clock protein BMAL1 is necessary for fertility and proper testosterone production in mice.</title>
        <authorList>
            <person name="Alvarez J.D."/>
            <person name="Hansen A."/>
            <person name="Ord T."/>
            <person name="Bebas P."/>
            <person name="Chappell P.E."/>
            <person name="Giebultowicz J.M."/>
            <person name="Williams C."/>
            <person name="Moss S."/>
            <person name="Sehgal A."/>
        </authorList>
    </citation>
    <scope>FUNCTION</scope>
    <scope>DISRUPTION PHENOTYPE</scope>
</reference>
<reference key="19">
    <citation type="journal article" date="2008" name="Mol. Cell. Biol.">
        <title>Evidence for an overlapping role of CLOCK and NPAS2 transcription factors in liver circadian oscillators.</title>
        <authorList>
            <person name="Bertolucci C."/>
            <person name="Cavallari N."/>
            <person name="Colognesi I."/>
            <person name="Aguzzi J."/>
            <person name="Chen Z."/>
            <person name="Caruso P."/>
            <person name="Foa A."/>
            <person name="Tosini G."/>
            <person name="Bernardi F."/>
            <person name="Pinotti M."/>
        </authorList>
    </citation>
    <scope>FUNCTION</scope>
</reference>
<reference key="20">
    <citation type="journal article" date="2008" name="Mol. Cell. Biol.">
        <title>Dual modification of BMAL1 by SUMO2/3 and ubiquitin promotes circadian activation of the CLOCK/BMAL1 complex.</title>
        <authorList>
            <person name="Lee J."/>
            <person name="Lee Y."/>
            <person name="Lee M.J."/>
            <person name="Park E."/>
            <person name="Kang S.H."/>
            <person name="Chung C.H."/>
            <person name="Lee K.H."/>
            <person name="Kim K."/>
        </authorList>
    </citation>
    <scope>SUMOYLATION AT LYS-259</scope>
    <scope>SUBCELLULAR LOCATION</scope>
    <scope>INTERACTION WITH SUMO3</scope>
    <scope>MUTAGENESIS OF LYS-259</scope>
    <scope>UBIQUITINATION</scope>
    <scope>PROTEASOMAL DEGRADATION</scope>
</reference>
<reference key="21">
    <citation type="journal article" date="2009" name="Cell Cycle">
        <title>A serine cluster mediates BMAL1-dependent CLOCK phosphorylation and degradation.</title>
        <authorList>
            <person name="Spengler M.L."/>
            <person name="Kuropatwinski K.K."/>
            <person name="Schumer M."/>
            <person name="Antoch M.P."/>
        </authorList>
    </citation>
    <scope>INTERACTION WITH GSK3B AND CLOCK</scope>
    <scope>PHOSPHORYLATION</scope>
</reference>
<reference key="22">
    <citation type="journal article" date="2009" name="FASEB J.">
        <title>Circadian rhythm transcription factor CLOCK regulates the transcriptional activity of the glucocorticoid receptor by acetylating its hinge region lysine cluster: potential physiological implications.</title>
        <authorList>
            <person name="Nader N."/>
            <person name="Chrousos G.P."/>
            <person name="Kino T."/>
        </authorList>
    </citation>
    <scope>FUNCTION</scope>
</reference>
<reference key="23">
    <citation type="journal article" date="2009" name="J. Biol. Chem.">
        <title>Preferential inhibition of BMAL2-CLOCK activity by PER2 reemphasizes its negative role and a positive role of BMAL2 in the circadian transcription.</title>
        <authorList>
            <person name="Sasaki M."/>
            <person name="Yoshitane H."/>
            <person name="Du N.H."/>
            <person name="Okano T."/>
            <person name="Fukada Y."/>
        </authorList>
    </citation>
    <scope>FUNCTION</scope>
    <scope>INTERACTION WITH PER2</scope>
</reference>
<reference key="24">
    <citation type="journal article" date="2009" name="Mol. Cell. Biol.">
        <title>Roles of CLOCK phosphorylation in suppression of E-box-dependent transcription.</title>
        <authorList>
            <person name="Yoshitane H."/>
            <person name="Takao T."/>
            <person name="Satomi Y."/>
            <person name="Du N.H."/>
            <person name="Okano T."/>
            <person name="Fukada Y."/>
        </authorList>
    </citation>
    <scope>PHOSPHORYLATION</scope>
</reference>
<reference key="25">
    <citation type="journal article" date="2009" name="Nat. Struct. Mol. Biol.">
        <title>CK2alpha phosphorylates BMAL1 to regulate the mammalian clock.</title>
        <authorList>
            <person name="Tamaru T."/>
            <person name="Hirayama J."/>
            <person name="Isojima Y."/>
            <person name="Nagai K."/>
            <person name="Norioka S."/>
            <person name="Takamatsu K."/>
            <person name="Sassone-Corsi P."/>
        </authorList>
    </citation>
    <scope>PHOSPHORYLATION AT SER-97</scope>
    <scope>SUBCELLULAR LOCATION</scope>
    <scope>MUTAGENESIS OF SER-97</scope>
    <scope>INTERACTION WITH CLOCK</scope>
</reference>
<reference key="26">
    <citation type="journal article" date="2009" name="Science">
        <title>Circadian clock feedback cycle through NAMPT-mediated NAD+ biosynthesis.</title>
        <authorList>
            <person name="Ramsey K.M."/>
            <person name="Yoshino J."/>
            <person name="Brace C.S."/>
            <person name="Abrassart D."/>
            <person name="Kobayashi Y."/>
            <person name="Marcheva B."/>
            <person name="Hong H.K."/>
            <person name="Chong J.L."/>
            <person name="Buhr E.D."/>
            <person name="Lee C."/>
            <person name="Takahashi J.S."/>
            <person name="Imai S."/>
            <person name="Bass J."/>
        </authorList>
    </citation>
    <scope>FUNCTION</scope>
    <scope>INTERACTION WITH SIRT1</scope>
</reference>
<reference key="27">
    <citation type="journal article" date="2009" name="Science">
        <title>Circadian control of the NAD+ salvage pathway by CLOCK-SIRT1.</title>
        <authorList>
            <person name="Nakahata Y."/>
            <person name="Sahar S."/>
            <person name="Astarita G."/>
            <person name="Kaluzova M."/>
            <person name="Sassone-Corsi P."/>
        </authorList>
    </citation>
    <scope>FUNCTION</scope>
</reference>
<reference key="28">
    <citation type="journal article" date="2010" name="BMC Mol. Biol.">
        <title>Identification of two amino acids in the C-terminal domain of mouse CRY2 essential for PER2 interaction.</title>
        <authorList>
            <person name="Ozber N."/>
            <person name="Baris I."/>
            <person name="Tatlici G."/>
            <person name="Gur I."/>
            <person name="Kilinc S."/>
            <person name="Unal E.B."/>
            <person name="Kavakli I.H."/>
        </authorList>
    </citation>
    <scope>FUNCTION</scope>
    <scope>INTERACTION WITH CRY2</scope>
</reference>
<reference key="29">
    <citation type="journal article" date="2010" name="Curr. Biol.">
        <title>Circadian clock gene Bmal1 is not essential; functional replacement with its paralog, Bmal2.</title>
        <authorList>
            <person name="Shi S."/>
            <person name="Hida A."/>
            <person name="McGuinness O.P."/>
            <person name="Wasserman D.H."/>
            <person name="Yamazaki S."/>
            <person name="Johnson C.H."/>
        </authorList>
    </citation>
    <scope>FUNCTION</scope>
</reference>
<reference key="30">
    <citation type="journal article" date="2010" name="J. Biol. Chem.">
        <title>CLOCK regulates circadian rhythms of hepatic glycogen synthesis through transcriptional activation of Gys2.</title>
        <authorList>
            <person name="Doi R."/>
            <person name="Oishi K."/>
            <person name="Ishida N."/>
        </authorList>
    </citation>
    <scope>FUNCTION</scope>
</reference>
<reference key="31">
    <citation type="journal article" date="2010" name="J. Biol. Chem.">
        <title>The transcriptional repressor ID2 can interact with the canonical clock components CLOCK and BMAL1 and mediate inhibitory effects on mPer1 expression.</title>
        <authorList>
            <person name="Ward S.M."/>
            <person name="Fernando S.J."/>
            <person name="Hou T.Y."/>
            <person name="Duffield G.E."/>
        </authorList>
    </citation>
    <scope>SUBCELLULAR LOCATION</scope>
    <scope>INTERACTION WITH ID1; ID2 AND ID3</scope>
</reference>
<reference key="32">
    <citation type="journal article" date="2010" name="Mol. Cell. Biol.">
        <title>Kruppel-like factor KLF10 is a link between the circadian clock and metabolism in liver.</title>
        <authorList>
            <person name="Guillaumond F."/>
            <person name="Grechez-Cassiau A."/>
            <person name="Subramaniam M."/>
            <person name="Brangolo S."/>
            <person name="Peteri-Brunback B."/>
            <person name="Staels B."/>
            <person name="Fievet C."/>
            <person name="Spelsberg T.C."/>
            <person name="Delaunay F."/>
            <person name="Teboul M."/>
        </authorList>
    </citation>
    <scope>FUNCTION</scope>
    <scope>INDUCTION</scope>
</reference>
<reference key="33">
    <citation type="journal article" date="2010" name="Nat. Struct. Mol. Biol.">
        <title>The histone methyltransferase MLL1 permits the oscillation of circadian gene expression.</title>
        <authorList>
            <person name="Katada S."/>
            <person name="Sassone-Corsi P."/>
        </authorList>
    </citation>
    <scope>INTERACTION WITH KMT2A</scope>
</reference>
<reference key="34">
    <citation type="journal article" date="2010" name="Nature">
        <title>Disruption of the clock components CLOCK and BMAL1 leads to hypoinsulinaemia and diabetes.</title>
        <authorList>
            <person name="Marcheva B."/>
            <person name="Ramsey K.M."/>
            <person name="Buhr E.D."/>
            <person name="Kobayashi Y."/>
            <person name="Su H."/>
            <person name="Ko C.H."/>
            <person name="Ivanova G."/>
            <person name="Omura C."/>
            <person name="Mo S."/>
            <person name="Vitaterna M.H."/>
            <person name="Lopez J.P."/>
            <person name="Philipson L.H."/>
            <person name="Bradfield C.A."/>
            <person name="Crosby S.D."/>
            <person name="Je Bailey L."/>
            <person name="Wang X."/>
            <person name="Takahashi J.S."/>
            <person name="Bass J."/>
        </authorList>
    </citation>
    <scope>FUNCTION</scope>
</reference>
<reference key="35">
    <citation type="journal article" date="2010" name="PLoS ONE">
        <title>Regulation of BMAL1 protein stability and circadian function by GSK3beta-mediated phosphorylation.</title>
        <authorList>
            <person name="Sahar S."/>
            <person name="Zocchi L."/>
            <person name="Kinoshita C."/>
            <person name="Borrelli E."/>
            <person name="Sassone-Corsi P."/>
        </authorList>
    </citation>
    <scope>PHOSPHORYLATION AT SER-17 AND THR-21</scope>
    <scope>INTERACTION WITH GSK3B</scope>
</reference>
<reference key="36">
    <citation type="journal article" date="2010" name="Proc. Natl. Acad. Sci. U.S.A.">
        <title>CLOCK and BMAL1 regulate MyoD and are necessary for maintenance of skeletal muscle phenotype and function.</title>
        <authorList>
            <person name="Andrews J.L."/>
            <person name="Zhang X."/>
            <person name="McCarthy J.J."/>
            <person name="McDearmon E.L."/>
            <person name="Hornberger T.A."/>
            <person name="Russell B."/>
            <person name="Campbell K.S."/>
            <person name="Arbogast S."/>
            <person name="Reid M.B."/>
            <person name="Walker J.R."/>
            <person name="Hogenesch J.B."/>
            <person name="Takahashi J.S."/>
            <person name="Esser K.A."/>
        </authorList>
    </citation>
    <scope>FUNCTION</scope>
</reference>
<reference key="37">
    <citation type="journal article" date="2010" name="Science">
        <title>Identification of RACK1 and protein kinase Calpha as integral components of the mammalian circadian clock.</title>
        <authorList>
            <person name="Robles M.S."/>
            <person name="Boyault C."/>
            <person name="Knutti D."/>
            <person name="Padmanabhan K."/>
            <person name="Weitz C.J."/>
        </authorList>
    </citation>
    <scope>INTERACTION WITH RACK1 AND PRKCA</scope>
    <scope>SUBCELLULAR LOCATION</scope>
    <scope>IDENTIFICATION BY MASS SPECTROMETRY</scope>
</reference>
<reference key="38">
    <citation type="journal article" date="2010" name="Toxicol. Sci.">
        <title>Disruption of CLOCK-BMAL1 transcriptional activity is responsible for aryl hydrocarbon receptor-mediated regulation of Period1 gene.</title>
        <authorList>
            <person name="Xu C.X."/>
            <person name="Krager S.L."/>
            <person name="Liao D.F."/>
            <person name="Tischkau S.A."/>
        </authorList>
    </citation>
    <scope>INTERACTION WITH AHR</scope>
</reference>
<reference key="39">
    <citation type="journal article" date="2011" name="Cell Cycle">
        <title>Circadian clock protein BMAL1 regulates cellular senescence in vivo.</title>
        <authorList>
            <person name="Khapre R.V."/>
            <person name="Kondratova A.A."/>
            <person name="Susova O."/>
            <person name="Kondratov R.V."/>
        </authorList>
    </citation>
    <scope>FUNCTION</scope>
    <scope>DISRUPTION PHENOTYPE</scope>
</reference>
<reference key="40">
    <citation type="journal article" date="2011" name="Islets">
        <title>Loss of Bmal1 leads to uncoupling and impaired glucose-stimulated insulin secretion in beta-cells.</title>
        <authorList>
            <person name="Lee J."/>
            <person name="Kim M.S."/>
            <person name="Li R."/>
            <person name="Liu V.Y."/>
            <person name="Fu L."/>
            <person name="Moore D.D."/>
            <person name="Ma K."/>
            <person name="Yechoor V.K."/>
        </authorList>
    </citation>
    <scope>FUNCTION</scope>
</reference>
<reference key="41">
    <citation type="journal article" date="2011" name="J. Biol. Chem.">
        <title>Biochemical analysis of the canonical model for the mammalian circadian clock.</title>
        <authorList>
            <person name="Ye R."/>
            <person name="Selby C.P."/>
            <person name="Ozturk N."/>
            <person name="Annayev Y."/>
            <person name="Sancar A."/>
        </authorList>
    </citation>
    <scope>INTERACTION WITH CLOCK; CRY1 AND PER2</scope>
</reference>
<reference key="42">
    <citation type="journal article" date="2011" name="J. Biol. Chem.">
        <title>cAMP-response element (CRE)-mediated transcription by activating transcription factor-4 (ATF4) is essential for circadian expression of the Period2 gene.</title>
        <authorList>
            <person name="Koyanagi S."/>
            <person name="Hamdan A.M."/>
            <person name="Horiguchi M."/>
            <person name="Kusunose N."/>
            <person name="Okamoto A."/>
            <person name="Matsunaga N."/>
            <person name="Ohdo S."/>
        </authorList>
    </citation>
    <scope>FUNCTION</scope>
</reference>
<reference key="43">
    <citation type="journal article" date="2011" name="J. Cell. Physiol.">
        <title>Deficiency in core circadian protein Bmal1 is associated with a prothrombotic and vascular phenotype.</title>
        <authorList>
            <person name="Somanath P.R."/>
            <person name="Podrez E.A."/>
            <person name="Chen J."/>
            <person name="Ma Y."/>
            <person name="Marchant K."/>
            <person name="Antoch M."/>
            <person name="Byzova T.V."/>
        </authorList>
    </citation>
    <scope>FUNCTION</scope>
</reference>
<reference key="44">
    <citation type="journal article" date="2011" name="J. Circadian. Rhythms.">
        <title>Magel2, a Prader-Willi syndrome candidate gene, modulates the activities of circadian rhythm proteins in cultured cells.</title>
        <authorList>
            <person name="Devos J."/>
            <person name="Weselake S.V."/>
            <person name="Wevrick R."/>
        </authorList>
    </citation>
    <scope>INTERACTION WITH MAGEL2</scope>
    <scope>SUBCELLULAR LOCATION</scope>
</reference>
<reference key="45">
    <citation type="journal article" date="2011" name="PLoS ONE">
        <title>Deficient of a clock gene, brain and muscle Arnt-like protein-1 (BMAL1), induces dyslipidemia and ectopic fat formation.</title>
        <authorList>
            <person name="Shimba S."/>
            <person name="Ogawa T."/>
            <person name="Hitosugi S."/>
            <person name="Ichihashi Y."/>
            <person name="Nakadaira Y."/>
            <person name="Kobayashi M."/>
            <person name="Tezuka M."/>
            <person name="Kosuge Y."/>
            <person name="Ishige K."/>
            <person name="Ito Y."/>
            <person name="Komiyama K."/>
            <person name="Okamatsu-Ogura Y."/>
            <person name="Kimura K."/>
            <person name="Saito M."/>
        </authorList>
    </citation>
    <scope>FUNCTION</scope>
</reference>
<reference key="46">
    <citation type="journal article" date="2011" name="Science">
        <title>Histone lysine demethylase JARID1a activates CLOCK-BMAL1 and influences the circadian clock.</title>
        <authorList>
            <person name="DiTacchio L."/>
            <person name="Le H.D."/>
            <person name="Vollmers C."/>
            <person name="Hatori M."/>
            <person name="Witcher M."/>
            <person name="Secombe J."/>
            <person name="Panda S."/>
        </authorList>
    </citation>
    <scope>INTERACTION WITH KDM5A</scope>
</reference>
<reference key="47">
    <citation type="journal article" date="2012" name="Cell Cycle">
        <title>The RelB subunit of NFkappaB acts as a negative regulator of circadian gene expression.</title>
        <authorList>
            <person name="Bellet M.M."/>
            <person name="Zocchi L."/>
            <person name="Sassone-Corsi P."/>
        </authorList>
    </citation>
    <scope>INTERACTION WITH RELB</scope>
</reference>
<reference key="48">
    <citation type="journal article" date="2012" name="FASEB J.">
        <title>The clock gene, brain and muscle Arnt-like 1, regulates adipogenesis via Wnt signaling pathway.</title>
        <authorList>
            <person name="Guo B."/>
            <person name="Chatterjee S."/>
            <person name="Li L."/>
            <person name="Kim J.M."/>
            <person name="Lee J."/>
            <person name="Yechoor V.K."/>
            <person name="Minze L.J."/>
            <person name="Hsueh W."/>
            <person name="Ma K."/>
        </authorList>
    </citation>
    <scope>FUNCTION</scope>
</reference>
<reference key="49">
    <citation type="journal article" date="2012" name="Mol. Cell">
        <title>Circadian Dbp transcription relies on highly dynamic BMAL1-CLOCK interaction with E boxes and requires the proteasome.</title>
        <authorList>
            <person name="Stratmann M."/>
            <person name="Suter D.M."/>
            <person name="Molina N."/>
            <person name="Naef F."/>
            <person name="Schibler U."/>
        </authorList>
    </citation>
    <scope>FUNCTION</scope>
</reference>
<reference key="50">
    <citation type="journal article" date="2012" name="PLoS ONE">
        <title>Circadian proteins CLOCK and BMAL1 in the chromatoid body, a RNA processing granule of male germ cells.</title>
        <authorList>
            <person name="Peruquetti R.L."/>
            <person name="de Mateo S."/>
            <person name="Sassone-Corsi P."/>
        </authorList>
    </citation>
    <scope>FUNCTION</scope>
    <scope>SUBCELLULAR LOCATION</scope>
    <scope>TISSUE SPECIFICITY</scope>
    <scope>INTERACTION WITH DDX4</scope>
</reference>
<reference key="51">
    <citation type="journal article" date="2012" name="Proc. Natl. Acad. Sci. U.S.A.">
        <title>PKCgamma participates in food entrainment by regulating BMAL1.</title>
        <authorList>
            <person name="Zhang L."/>
            <person name="Abraham D."/>
            <person name="Lin S.T."/>
            <person name="Oster H."/>
            <person name="Eichele G."/>
            <person name="Fu Y.H."/>
            <person name="Ptacek L.J."/>
        </authorList>
    </citation>
    <scope>INTERACTION WITH PRKCG</scope>
    <scope>UBIQUITINATION</scope>
    <scope>PROTEASOMAL DEGRADATION</scope>
</reference>
<reference key="52">
    <citation type="journal article" date="2013" name="Am. J. Physiol.">
        <title>A role for the circadian clock protein Per1 in the regulation of aldosterone levels and renal Na+ retention.</title>
        <authorList>
            <person name="Richards J."/>
            <person name="Cheng K.Y."/>
            <person name="All S."/>
            <person name="Skopis G."/>
            <person name="Jeffers L."/>
            <person name="Lynch I.J."/>
            <person name="Wingo C.S."/>
            <person name="Gumz M.L."/>
        </authorList>
    </citation>
    <scope>INTERACTION WITH PER1</scope>
    <scope>TISSUE SPECIFICITY</scope>
</reference>
<reference key="53">
    <citation type="journal article" date="2013" name="Am. J. Physiol.">
        <title>High-fat diet-induced hyperinsulinemia and tissue-specific insulin resistance in Cry-deficient mice.</title>
        <authorList>
            <person name="Barclay J.L."/>
            <person name="Shostak A."/>
            <person name="Leliavski A."/>
            <person name="Tsang A.H."/>
            <person name="Johren O."/>
            <person name="Muller-Fielitz H."/>
            <person name="Landgraf D."/>
            <person name="Naujokat N."/>
            <person name="van der Horst G.T."/>
            <person name="Oster H."/>
        </authorList>
    </citation>
    <scope>TISSUE SPECIFICITY</scope>
    <scope>INDUCTION</scope>
</reference>
<reference key="54">
    <citation type="journal article" date="2013" name="Am. J. Physiol.">
        <title>Mechanism of the circadian clock in physiology.</title>
        <authorList>
            <person name="Richards J."/>
            <person name="Gumz M.L."/>
        </authorList>
    </citation>
    <scope>REVIEW</scope>
</reference>
<reference key="55">
    <citation type="journal article" date="2013" name="Arch. Dermatol. Res.">
        <title>The clock gene brain and muscle Arnt-like protein-1 (BMAL1) is involved in hair growth.</title>
        <authorList>
            <person name="Watabe Y."/>
            <person name="Tomioka M."/>
            <person name="Watabe A."/>
            <person name="Aihara M."/>
            <person name="Shimba S."/>
            <person name="Inoue H."/>
        </authorList>
    </citation>
    <scope>FUNCTION</scope>
</reference>
<reference key="56">
    <citation type="journal article" date="2013" name="Biochem. Biophys. Res. Commun.">
        <title>The molecular clock regulates circadian transcription of tissue factor gene.</title>
        <authorList>
            <person name="Oishi K."/>
            <person name="Koyanagi S."/>
            <person name="Ohkura N."/>
        </authorList>
    </citation>
    <scope>FUNCTION</scope>
</reference>
<reference key="57">
    <citation type="journal article" date="2013" name="Biochem. Biophys. Res. Commun.">
        <title>O-GlcNAcylation of BMAL1 regulates circadian rhythms in NIH3T3 fibroblasts.</title>
        <authorList>
            <person name="Ma Y.T."/>
            <person name="Luo H."/>
            <person name="Guan W.J."/>
            <person name="Zhang H."/>
            <person name="Chen C."/>
            <person name="Wang Z."/>
            <person name="Li J.D."/>
        </authorList>
    </citation>
    <scope>GLYCOSYLATION</scope>
    <scope>INTERACTION WITH OGT</scope>
</reference>
<reference key="58">
    <citation type="journal article" date="2013" name="Biochem. Biophys. Res. Commun.">
        <title>Effects of NAD(P)H and its derivatives on the DNA-binding activity of NPAS2, a mammalian circadian transcription factor.</title>
        <authorList>
            <person name="Yoshii K."/>
            <person name="Ishijima S."/>
            <person name="Sagami I."/>
        </authorList>
    </citation>
    <scope>DNA-BINDING</scope>
</reference>
<reference key="59">
    <citation type="journal article" date="2013" name="Cell Metab.">
        <title>O-GlcNAc signaling entrains the circadian clock by inhibiting BMAL1/CLOCK ubiquitination.</title>
        <authorList>
            <person name="Li M.D."/>
            <person name="Ruan H.B."/>
            <person name="Hughes M.E."/>
            <person name="Lee J.S."/>
            <person name="Singh J.P."/>
            <person name="Jones S.P."/>
            <person name="Nitabach M.N."/>
            <person name="Yang X."/>
        </authorList>
    </citation>
    <scope>GLYCOSYLATION</scope>
    <scope>UBIQUITINATION</scope>
    <scope>MUTAGENESIS OF SER-418</scope>
</reference>
<reference key="60">
    <citation type="journal article" date="2013" name="Cell Rep.">
        <title>The circadian molecular clock regulates adult hippocampal neurogenesis by controlling the timing of cell-cycle entry and exit.</title>
        <authorList>
            <person name="Bouchard-Cannon P."/>
            <person name="Mendoza-Viveros L."/>
            <person name="Yuen A."/>
            <person name="Kaern M."/>
            <person name="Cheng H.Y."/>
        </authorList>
    </citation>
    <scope>FUNCTION</scope>
</reference>
<reference key="61">
    <citation type="journal article" date="2013" name="J. Cell Sci.">
        <title>Brain and muscle Arnt-like 1 is a key regulator of myogenesis.</title>
        <authorList>
            <person name="Chatterjee S."/>
            <person name="Nam D."/>
            <person name="Guo B."/>
            <person name="Kim J.M."/>
            <person name="Winnier G.E."/>
            <person name="Lee J."/>
            <person name="Berdeaux R."/>
            <person name="Yechoor V.K."/>
            <person name="Ma K."/>
        </authorList>
    </citation>
    <scope>FUNCTION</scope>
</reference>
<reference key="62">
    <citation type="journal article" date="2013" name="J. Clin. Invest.">
        <title>Circadian clock proteins regulate neuronal redox homeostasis and neurodegeneration.</title>
        <authorList>
            <person name="Musiek E.S."/>
            <person name="Lim M.M."/>
            <person name="Yang G."/>
            <person name="Bauer A.Q."/>
            <person name="Qi L."/>
            <person name="Lee Y."/>
            <person name="Roh J.H."/>
            <person name="Ortiz-Gonzalez X."/>
            <person name="Dearborn J.T."/>
            <person name="Culver J.P."/>
            <person name="Herzog E.D."/>
            <person name="Hogenesch J.B."/>
            <person name="Wozniak D.F."/>
            <person name="Dikranian K."/>
            <person name="Giasson B.I."/>
            <person name="Weaver D.R."/>
            <person name="Holtzman D.M."/>
            <person name="Fitzgerald G.A."/>
        </authorList>
    </citation>
    <scope>FUNCTION</scope>
    <scope>DISRUPTION PHENOTYPE</scope>
</reference>
<reference key="63">
    <citation type="journal article" date="2013" name="J. Neurosci.">
        <title>Circadian rhythm of contrast sensitivity is regulated by a dopamine-neuronal PAS-domain protein 2-adenylyl cyclase 1 signaling pathway in retinal ganglion cells.</title>
        <authorList>
            <person name="Hwang C.K."/>
            <person name="Chaurasia S.S."/>
            <person name="Jackson C.R."/>
            <person name="Chan G.C."/>
            <person name="Storm D.R."/>
            <person name="Iuvone P.M."/>
        </authorList>
    </citation>
    <scope>FUNCTION</scope>
</reference>
<reference key="64">
    <citation type="journal article" date="2013" name="Mol. Cell. Biol.">
        <title>Bmal1 and beta-cell clock are required for adaptation to circadian disruption, and their loss of function leads to oxidative stress-induced beta-cell failure in mice.</title>
        <authorList>
            <person name="Lee J."/>
            <person name="Moulik M."/>
            <person name="Fang Z."/>
            <person name="Saha P."/>
            <person name="Zou F."/>
            <person name="Xu Y."/>
            <person name="Nelson D.L."/>
            <person name="Ma K."/>
            <person name="Moore D.D."/>
            <person name="Yechoor V.K."/>
        </authorList>
    </citation>
    <scope>FUNCTION</scope>
</reference>
<reference key="65">
    <citation type="journal article" date="2013" name="Nat. Commun.">
        <title>Metastasis-associated protein 1 is an integral component of the circadian molecular machinery.</title>
        <authorList>
            <person name="Li D.Q."/>
            <person name="Pakala S.B."/>
            <person name="Reddy S.D."/>
            <person name="Peng S."/>
            <person name="Balasenthil S."/>
            <person name="Deng C.X."/>
            <person name="Lee C.C."/>
            <person name="Rea M.A."/>
            <person name="Kumar R."/>
        </authorList>
    </citation>
    <scope>FUNCTION</scope>
    <scope>INTERACTION WITH MTA1</scope>
</reference>
<reference key="66">
    <citation type="journal article" date="2013" name="PLoS ONE">
        <title>Global loss of Bmal1 expression alters adipose tissue hormones, gene expression and glucose metabolism.</title>
        <authorList>
            <person name="Kennaway D.J."/>
            <person name="Varcoe T.J."/>
            <person name="Voultsios A."/>
            <person name="Boden M.J."/>
        </authorList>
    </citation>
    <scope>FUNCTION</scope>
</reference>
<reference key="67">
    <citation type="journal article" date="2013" name="Physiol. Rev.">
        <title>Metabolism and the circadian clock converge.</title>
        <authorList>
            <person name="Eckel-Mahan K."/>
            <person name="Sassone-Corsi P."/>
        </authorList>
    </citation>
    <scope>REVIEW</scope>
</reference>
<reference key="68">
    <citation type="journal article" date="2013" name="Proc. Natl. Acad. Sci. U.S.A.">
        <title>A positive feedback loop links circadian clock factor CLOCK-BMAL1 to the basic transcriptional machinery.</title>
        <authorList>
            <person name="Lande-Diner L."/>
            <person name="Boyault C."/>
            <person name="Kim J.Y."/>
            <person name="Weitz C.J."/>
        </authorList>
    </citation>
    <scope>INTERACTION WITH THRAP3</scope>
</reference>
<reference key="69">
    <citation type="journal article" date="2013" name="Science">
        <title>Circadian gene Bmal1 regulates diurnal oscillations of Ly6C(hi) inflammatory monocytes.</title>
        <authorList>
            <person name="Nguyen K.D."/>
            <person name="Fentress S.J."/>
            <person name="Qiu Y."/>
            <person name="Yun K."/>
            <person name="Cox J.S."/>
            <person name="Chawla A."/>
        </authorList>
    </citation>
    <scope>FUNCTION</scope>
    <scope>INTERACTION WITH CLOCK; EED; EZH2 AND SUZ12</scope>
</reference>
<reference key="70">
    <citation type="journal article" date="2014" name="Aging (Albany NY)">
        <title>BMAL1-dependent regulation of the mTOR signaling pathway delays aging.</title>
        <authorList>
            <person name="Khapre R.V."/>
            <person name="Kondratova A.A."/>
            <person name="Patel S."/>
            <person name="Dubrovsky Y."/>
            <person name="Wrobel M."/>
            <person name="Antoch M.P."/>
            <person name="Kondratov R.V."/>
        </authorList>
    </citation>
    <scope>FUNCTION</scope>
    <scope>DISRUPTION PHENOTYPE</scope>
</reference>
<reference key="71">
    <citation type="journal article" date="2014" name="Cell Rep.">
        <title>SRC-2 is an essential coactivator for orchestrating metabolism and circadian rhythm.</title>
        <authorList>
            <person name="Stashi E."/>
            <person name="Lanz R.B."/>
            <person name="Mao J."/>
            <person name="Michailidis G."/>
            <person name="Zhu B."/>
            <person name="Kettner N.M."/>
            <person name="Putluri N."/>
            <person name="Reineke E.L."/>
            <person name="Reineke L.C."/>
            <person name="Dasgupta S."/>
            <person name="Dean A."/>
            <person name="Stevenson C.R."/>
            <person name="Sivasubramanian N."/>
            <person name="Sreekumar A."/>
            <person name="Demayo F."/>
            <person name="York B."/>
            <person name="Fu L."/>
            <person name="O'Malley B.W."/>
        </authorList>
    </citation>
    <scope>INTERACTION WITH NCOA2</scope>
</reference>
<reference key="72">
    <citation type="journal article" date="2014" name="Exp. Mol. Med.">
        <title>Presence of multiple peripheral circadian oscillators in the tissues controlling voiding function in mice.</title>
        <authorList>
            <person name="Noh J.Y."/>
            <person name="Han D.H."/>
            <person name="Kim M.H."/>
            <person name="Ko I.G."/>
            <person name="Kim S.E."/>
            <person name="Park N."/>
            <person name="Kyoung Choe H."/>
            <person name="Kim K.H."/>
            <person name="Kim K."/>
            <person name="Kim C.J."/>
            <person name="Cho S."/>
        </authorList>
    </citation>
    <scope>INDUCTION</scope>
    <scope>TISSUE SPECIFICITY</scope>
</reference>
<reference key="73">
    <citation type="journal article" date="2014" name="Genes Dev.">
        <title>CLOCK:BMAL1 is a pioneer-like transcription factor.</title>
        <authorList>
            <person name="Menet J.S."/>
            <person name="Pescatore S."/>
            <person name="Rosbash M."/>
        </authorList>
    </citation>
    <scope>FUNCTION</scope>
</reference>
<reference key="74">
    <citation type="journal article" date="2014" name="Hepatology">
        <title>CLOCK/BMAL1 regulates circadian change of mouse hepatic insulin sensitivity via SIRT1.</title>
        <authorList>
            <person name="Zhou B."/>
            <person name="Zhang Y."/>
            <person name="Zhang F."/>
            <person name="Xia Y."/>
            <person name="Liu J."/>
            <person name="Huang R."/>
            <person name="Wang Y."/>
            <person name="Hu Y."/>
            <person name="Wu J."/>
            <person name="Dai C."/>
            <person name="Wang H."/>
            <person name="Tu Y."/>
            <person name="Peng X."/>
            <person name="Wang Y."/>
            <person name="Zhai Q."/>
        </authorList>
    </citation>
    <scope>FUNCTION</scope>
</reference>
<reference key="75">
    <citation type="journal article" date="2014" name="J. Biol. Chem.">
        <title>Gene model 129 (Gm129) encodes a novel transcriptional repressor that modulates circadian gene expression.</title>
        <authorList>
            <person name="Annayev Y."/>
            <person name="Adar S."/>
            <person name="Chiou Y.Y."/>
            <person name="Lieb J."/>
            <person name="Sancar A."/>
            <person name="Ye R."/>
        </authorList>
    </citation>
    <scope>FUNCTION</scope>
    <scope>INTERACTION WITH CIART</scope>
</reference>
<reference key="76">
    <citation type="journal article" date="2014" name="Mol. Cell. Endocrinol.">
        <title>Modulation of glucocorticoid receptor induction properties by core circadian clock proteins.</title>
        <authorList>
            <person name="Han D.H."/>
            <person name="Lee Y.J."/>
            <person name="Kim K."/>
            <person name="Kim C.J."/>
            <person name="Cho S."/>
        </authorList>
    </citation>
    <scope>FUNCTION IN GR REPRESSION</scope>
</reference>
<reference key="77">
    <citation type="journal article" date="2014" name="PLoS Biol.">
        <title>A novel protein, CHRONO, functions as a core component of the mammalian circadian clock.</title>
        <authorList>
            <person name="Goriki A."/>
            <person name="Hatanaka F."/>
            <person name="Myung J."/>
            <person name="Kim J.K."/>
            <person name="Yoritaka T."/>
            <person name="Tanoue S."/>
            <person name="Abe T."/>
            <person name="Kiyonari H."/>
            <person name="Fujimoto K."/>
            <person name="Kato Y."/>
            <person name="Todo T."/>
            <person name="Matsubara A."/>
            <person name="Forger D."/>
            <person name="Takumi T."/>
        </authorList>
    </citation>
    <scope>FUNCTION</scope>
    <scope>INTERACTION WITH CIART</scope>
</reference>
<reference key="78">
    <citation type="journal article" date="2014" name="Trends Cell Biol.">
        <title>Molecular architecture of the mammalian circadian clock.</title>
        <authorList>
            <person name="Partch C.L."/>
            <person name="Green C.B."/>
            <person name="Takahashi J.S."/>
        </authorList>
    </citation>
    <scope>REVIEW</scope>
</reference>
<reference key="79">
    <citation type="journal article" date="2016" name="Cell Rep.">
        <title>Distinct roles of HDAC3 in the core circadian negative feedback loop are critical for clock function.</title>
        <authorList>
            <person name="Shi G."/>
            <person name="Xie P."/>
            <person name="Qu Z."/>
            <person name="Zhang Z."/>
            <person name="Dong Z."/>
            <person name="An Y."/>
            <person name="Xing L."/>
            <person name="Liu Z."/>
            <person name="Dong Y."/>
            <person name="Xu G."/>
            <person name="Yang L."/>
            <person name="Liu Y."/>
            <person name="Xu Y."/>
        </authorList>
    </citation>
    <scope>SUBCELLULAR LOCATION</scope>
    <scope>INTERACTION WITH HDAC3 AND CRY1</scope>
    <scope>UBIQUITINATION AND PROTEASOMAL DEGRADATION</scope>
</reference>
<reference key="80">
    <citation type="journal article" date="2017" name="Mol. Cell">
        <title>CLOCK acetylates ASS1 to drive circadian rhythm of ureagenesis.</title>
        <authorList>
            <person name="Lin R."/>
            <person name="Mo Y."/>
            <person name="Zha H."/>
            <person name="Qu Z."/>
            <person name="Xie P."/>
            <person name="Zhu Z.J."/>
            <person name="Xu Y."/>
            <person name="Xiong Y."/>
            <person name="Guan K.L."/>
        </authorList>
    </citation>
    <scope>FUNCTION</scope>
</reference>
<reference key="81">
    <citation type="journal article" date="2017" name="Oncotarget">
        <title>Cancer/testis antigen PIWIL2 suppresses circadian rhythms by regulating the stability and activity of BMAL1 and CLOCK.</title>
        <authorList>
            <person name="Lu Y."/>
            <person name="Zheng X."/>
            <person name="Hu W."/>
            <person name="Bian S."/>
            <person name="Zhang Z."/>
            <person name="Tao D."/>
            <person name="Liu Y."/>
            <person name="Ma Y."/>
        </authorList>
    </citation>
    <scope>INTERACTION WITH PIWIL2</scope>
    <scope>TISSUE SPECIFICITY</scope>
</reference>
<reference key="82">
    <citation type="journal article" date="2018" name="Biochem. J.">
        <title>Deubiquitinating enzyme USP9X regulates cellular clock function by modulating the ubiquitination and degradation of a core circadian protein BMAL1.</title>
        <authorList>
            <person name="Zhang Y."/>
            <person name="Duan C."/>
            <person name="Yang J."/>
            <person name="Chen S."/>
            <person name="Liu Q."/>
            <person name="Zhou L."/>
            <person name="Huang Z."/>
            <person name="Xu Y."/>
            <person name="Xu G."/>
        </authorList>
    </citation>
    <scope>DEUBIQUITINATION BY USP9X</scope>
    <scope>INTERACTION WITH USP9X</scope>
</reference>
<reference key="83">
    <citation type="journal article" date="2018" name="Cell Metab.">
        <title>Autophagy regulates the liver clock and glucose metabolism by degrading CRY1.</title>
        <authorList>
            <person name="Toledo M."/>
            <person name="Batista-Gonzalez A."/>
            <person name="Merheb E."/>
            <person name="Aoun M.L."/>
            <person name="Tarabra E."/>
            <person name="Feng D."/>
            <person name="Sarparanta J."/>
            <person name="Merlo P."/>
            <person name="Botre F."/>
            <person name="Schwartz G.J."/>
            <person name="Pessin J.E."/>
            <person name="Singh R."/>
        </authorList>
    </citation>
    <scope>LYSOSOME-MEDIATED DEGRADATION</scope>
</reference>
<reference key="84">
    <citation type="journal article" date="2018" name="Cell Rep.">
        <title>The circadian clock controls immune checkpoint pathway in sepsis.</title>
        <authorList>
            <person name="Deng W."/>
            <person name="Zhu S."/>
            <person name="Zeng L."/>
            <person name="Liu J."/>
            <person name="Kang R."/>
            <person name="Yang M."/>
            <person name="Cao L."/>
            <person name="Wang H."/>
            <person name="Billiar T.R."/>
            <person name="Jiang J."/>
            <person name="Xie M."/>
            <person name="Tang D."/>
        </authorList>
    </citation>
    <scope>FUNCTION</scope>
    <scope>DISRUPTION PHENOTYPE</scope>
    <scope>MUTAGENESIS OF ILE-323</scope>
</reference>
<reference key="85">
    <citation type="journal article" date="2018" name="J. Mol. Neurosci.">
        <title>Mice lacking EGR1 have impaired clock gene (BMAL1) oscillation, locomotor activity, and body temperature.</title>
        <authorList>
            <person name="Riedel C.S."/>
            <person name="Georg B."/>
            <person name="Joergensen H.L."/>
            <person name="Hannibal J."/>
            <person name="Fahrenkrug J."/>
        </authorList>
    </citation>
    <scope>TISSUE SPECIFICITY</scope>
</reference>
<reference key="86">
    <citation type="journal article" date="2018" name="PLoS Biol.">
        <title>Transcriptional programming of lipid and amino acid metabolism by the skeletal muscle circadian clock.</title>
        <authorList>
            <person name="Dyar K.A."/>
            <person name="Hubert M.J."/>
            <person name="Mir A.A."/>
            <person name="Ciciliot S."/>
            <person name="Lutter D."/>
            <person name="Greulich F."/>
            <person name="Quagliarini F."/>
            <person name="Kleinert M."/>
            <person name="Fischer K."/>
            <person name="Eichmann T.O."/>
            <person name="Wright L.E."/>
            <person name="Pena Paz M.I."/>
            <person name="Casarin A."/>
            <person name="Pertegato V."/>
            <person name="Romanello V."/>
            <person name="Albiero M."/>
            <person name="Mazzucco S."/>
            <person name="Rizzuto R."/>
            <person name="Salviati L."/>
            <person name="Biolo G."/>
            <person name="Blaauw B."/>
            <person name="Schiaffino S."/>
            <person name="Uhlenhaut N.H."/>
        </authorList>
    </citation>
    <scope>FUNCTION</scope>
    <scope>DISRUPTION PHENOTYPE</scope>
</reference>
<reference key="87">
    <citation type="journal article" date="2019" name="Elife">
        <title>Acetylation of BMAL1 by TIP60 controls BRD4-P-TEFb recruitment to circadian promoters.</title>
        <authorList>
            <person name="Petkau N."/>
            <person name="Budak H."/>
            <person name="Zhou X."/>
            <person name="Oster H."/>
            <person name="Eichele G."/>
        </authorList>
    </citation>
    <scope>ACETYLATION AT LYS-544</scope>
    <scope>MUTAGENESIS OF LYS-544</scope>
</reference>
<reference key="88">
    <citation type="journal article" date="2012" name="Science">
        <title>Crystal structure of the heterodimeric CLOCK:BMAL1 transcriptional activator complex.</title>
        <authorList>
            <person name="Huang N."/>
            <person name="Chelliah Y."/>
            <person name="Shan Y."/>
            <person name="Taylor C.A."/>
            <person name="Yoo S.H."/>
            <person name="Partch C."/>
            <person name="Green C.B."/>
            <person name="Zhang H."/>
            <person name="Takahashi J.S."/>
        </authorList>
    </citation>
    <scope>X-RAY CRYSTALLOGRAPHY (2.27 ANGSTROMS) OF 69-453 IN COMPLEX WITH CLOCK</scope>
    <scope>FUNCTION</scope>
    <scope>INTERACTION WITH CLOCK</scope>
    <scope>MUTAGENESIS OF LEU-102; LEU-122 AND ILE-323</scope>
</reference>
<feature type="chain" id="PRO_0000127158" description="Basic helix-loop-helix ARNT-like protein 1">
    <location>
        <begin position="1"/>
        <end position="632"/>
    </location>
</feature>
<feature type="domain" description="bHLH" evidence="3">
    <location>
        <begin position="79"/>
        <end position="132"/>
    </location>
</feature>
<feature type="domain" description="PAS 1" evidence="2">
    <location>
        <begin position="150"/>
        <end position="222"/>
    </location>
</feature>
<feature type="domain" description="PAS 2" evidence="2">
    <location>
        <begin position="333"/>
        <end position="403"/>
    </location>
</feature>
<feature type="domain" description="PAC">
    <location>
        <begin position="408"/>
        <end position="451"/>
    </location>
</feature>
<feature type="region of interest" description="Disordered" evidence="4">
    <location>
        <begin position="1"/>
        <end position="39"/>
    </location>
</feature>
<feature type="region of interest" description="Disordered" evidence="4">
    <location>
        <begin position="465"/>
        <end position="498"/>
    </location>
</feature>
<feature type="region of interest" description="Interaction with CIART">
    <location>
        <begin position="514"/>
        <end position="594"/>
    </location>
</feature>
<feature type="region of interest" description="Disordered" evidence="4">
    <location>
        <begin position="517"/>
        <end position="601"/>
    </location>
</feature>
<feature type="short sequence motif" description="Nuclear localization signal" evidence="13">
    <location>
        <begin position="36"/>
        <end position="41"/>
    </location>
</feature>
<feature type="short sequence motif" description="Nuclear export signal 1" evidence="13">
    <location>
        <begin position="149"/>
        <end position="159"/>
    </location>
</feature>
<feature type="short sequence motif" description="Nuclear export signal 2" evidence="13">
    <location>
        <begin position="367"/>
        <end position="375"/>
    </location>
</feature>
<feature type="compositionally biased region" description="Low complexity" evidence="4">
    <location>
        <begin position="517"/>
        <end position="527"/>
    </location>
</feature>
<feature type="site" description="Interaction with E-box DNA" evidence="1">
    <location>
        <position position="84"/>
    </location>
</feature>
<feature type="site" description="Interaction with E-box DNA" evidence="1">
    <location>
        <position position="87"/>
    </location>
</feature>
<feature type="site" description="Interaction with E-box DNA" evidence="1">
    <location>
        <position position="88"/>
    </location>
</feature>
<feature type="site" description="Interaction with E-box DNA" evidence="1">
    <location>
        <position position="92"/>
    </location>
</feature>
<feature type="site" description="Important for interaction with CLOCK" evidence="1">
    <location>
        <position position="132"/>
    </location>
</feature>
<feature type="modified residue" description="Phosphoserine; by GSK3-beta" evidence="28">
    <location>
        <position position="17"/>
    </location>
</feature>
<feature type="modified residue" description="Phosphothreonine; by GSK3-beta" evidence="28">
    <location>
        <position position="21"/>
    </location>
</feature>
<feature type="modified residue" description="Phosphoserine" evidence="1">
    <location>
        <position position="85"/>
    </location>
</feature>
<feature type="modified residue" description="Phosphoserine; by CK2" evidence="24">
    <location>
        <position position="97"/>
    </location>
</feature>
<feature type="modified residue" description="N6-acetyllysine" evidence="14 20 84">
    <location>
        <position position="544"/>
    </location>
</feature>
<feature type="cross-link" description="Glycyl lysine isopeptide (Lys-Gly) (interchain with G-Cter in SUMO2 and SUMO3)" evidence="18">
    <location>
        <position position="259"/>
    </location>
</feature>
<feature type="cross-link" description="Glycyl lysine isopeptide (Lys-Gly) (interchain with G-Cter in SUMO); alternate" evidence="9">
    <location>
        <position position="266"/>
    </location>
</feature>
<feature type="cross-link" description="Glycyl lysine isopeptide (Lys-Gly) (interchain with G-Cter in SUMO2); alternate" evidence="1">
    <location>
        <position position="266"/>
    </location>
</feature>
<feature type="splice variant" id="VSP_007992" description="In isoform 2, isoform 4 and isoform 5." evidence="86 87 88">
    <location>
        <begin position="48"/>
        <end position="54"/>
    </location>
</feature>
<feature type="splice variant" id="VSP_007993" description="In isoform 3." evidence="87">
    <location>
        <begin position="49"/>
        <end position="68"/>
    </location>
</feature>
<feature type="splice variant" id="VSP_007995" description="In isoform 5." evidence="86">
    <original>AADGFLFVVGCDRGKILFVSESVFKILNYSQNDLIGQSLFDYLHPKDIAKVKEQLSSSDTAPRERLIDAKTGLPVKTDITPGPSRLCSGARRSFFCRMKCNRPSVKVEDKDFASTCSKKKDRKSFCTIHSTGYLKSWPPTKMGLDEDNEPDNEGCNLSCLVAIGRLHSHMVPQPANGEIRVKSMEYVSRHAIDGKFVFVDQRATAILAYLPQELLGTSCYEYFHQDDIGHLAECHRQVLQTREKITTNCYKFKIKDGSFITLRSRWFSFMNPWTKEVEYIVSTNTVVLANVLEGGDPTFPQLTAPPHSMDSMLPSGEGGPKRT</original>
    <variation>DVTEGRSSLSPSLSSRSSIIARMTLLARACLTTCIQKILPKLRNSYLPRTLRPGSDSLMPRLDFRLKRI</variation>
    <location>
        <begin position="161"/>
        <end position="483"/>
    </location>
</feature>
<feature type="splice variant" id="VSP_007994" description="In isoform 3 and isoform 4." evidence="87 88">
    <original>K</original>
    <variation>KA</variation>
    <location>
        <position position="280"/>
    </location>
</feature>
<feature type="splice variant" id="VSP_007996" description="In isoform 5." evidence="86">
    <location>
        <begin position="484"/>
        <end position="632"/>
    </location>
</feature>
<feature type="mutagenesis site" description="Loss of nuclear localization." evidence="13">
    <original>KR</original>
    <variation>AA</variation>
    <location>
        <begin position="38"/>
        <end position="39"/>
    </location>
</feature>
<feature type="mutagenesis site" description="Impaired nuclear accumulation, decreased interaction with CLOCK and disruption of circadian clock function." evidence="24">
    <original>S</original>
    <variation>A</variation>
    <location>
        <position position="97"/>
    </location>
</feature>
<feature type="mutagenesis site" description="Reduced CLOCK binding. Abolishes transcriptional activation by the CLOCK-BMAL1 heterodimer." evidence="48">
    <original>L</original>
    <variation>E</variation>
    <location>
        <position position="102"/>
    </location>
</feature>
<feature type="mutagenesis site" description="Reduced CLOCK binding. Abolishes transcriptional activation by the CLOCK-BMAL1 heterodimer." evidence="48">
    <original>L</original>
    <variation>E</variation>
    <location>
        <position position="122"/>
    </location>
</feature>
<feature type="mutagenesis site" description="Significant reduction in nucleocytoplasmic shuttling; when associated with A-157." evidence="13">
    <original>L</original>
    <variation>A</variation>
    <location>
        <position position="154"/>
    </location>
</feature>
<feature type="mutagenesis site" description="Significant reduction in nucleocytoplasmic shuttling; when associated with A-154." evidence="13">
    <original>L</original>
    <variation>A</variation>
    <location>
        <position position="157"/>
    </location>
</feature>
<feature type="mutagenesis site" description="No effect on sumoylation." evidence="9">
    <original>K</original>
    <variation>R</variation>
    <location>
        <position position="230"/>
    </location>
</feature>
<feature type="mutagenesis site" description="No effect on sumoylation." evidence="9">
    <original>K</original>
    <variation>R</variation>
    <location>
        <position position="236"/>
    </location>
</feature>
<feature type="mutagenesis site" description="Significant decrease in; transcriptional activity, localization in PML body, ubiquitination and proteasome-mediated proteolysis." evidence="18">
    <original>K</original>
    <variation>R</variation>
    <location>
        <position position="259"/>
    </location>
</feature>
<feature type="mutagenesis site" description="Abolishes sumoylation." evidence="9">
    <original>K</original>
    <variation>R</variation>
    <location>
        <position position="266"/>
    </location>
</feature>
<feature type="mutagenesis site" description="No effect on sumoylation." evidence="9">
    <original>K</original>
    <variation>R</variation>
    <location>
        <position position="279"/>
    </location>
</feature>
<feature type="mutagenesis site" description="Reduced CLOCK binding. Slightly reduced transcriptional activation by the CLOCK-BMAL1 heterodimer. Impairs regulation of circadian clock. Loss of ability to inhibit the expression of CD274 in macrophages." evidence="48 82">
    <original>I</original>
    <variation>D</variation>
    <location>
        <position position="323"/>
    </location>
</feature>
<feature type="mutagenesis site" description="Significant reduction in nucleocytoplasmic shuttling; when associated with A-374." evidence="13">
    <original>L</original>
    <variation>A</variation>
    <location>
        <position position="370"/>
    </location>
</feature>
<feature type="mutagenesis site" description="Significant reduction in nucleocytoplasmic shuttling; when associated with A-370." evidence="13">
    <original>L</original>
    <variation>A</variation>
    <location>
        <position position="374"/>
    </location>
</feature>
<feature type="mutagenesis site" description="Decreases without abolishing O-GlcNAcylation." evidence="55">
    <original>S</original>
    <variation>A</variation>
    <location>
        <position position="418"/>
    </location>
</feature>
<feature type="mutagenesis site" description="Decreased acetylation, leading to decreased transcription elongation during the activation phase of the circadian cycle." evidence="84">
    <original>K</original>
    <variation>R</variation>
    <location>
        <position position="544"/>
    </location>
</feature>
<feature type="sequence conflict" description="In Ref. 1; BAA76414/BAA81898." evidence="89" ref="1">
    <original>F</original>
    <variation>L</variation>
    <location>
        <position position="254"/>
    </location>
</feature>
<feature type="helix" evidence="91">
    <location>
        <begin position="79"/>
        <end position="105"/>
    </location>
</feature>
<feature type="helix" evidence="91">
    <location>
        <begin position="107"/>
        <end position="111"/>
    </location>
</feature>
<feature type="helix" evidence="91">
    <location>
        <begin position="118"/>
        <end position="133"/>
    </location>
</feature>
<feature type="helix" evidence="91">
    <location>
        <begin position="151"/>
        <end position="160"/>
    </location>
</feature>
<feature type="strand" evidence="91">
    <location>
        <begin position="164"/>
        <end position="170"/>
    </location>
</feature>
<feature type="turn" evidence="91">
    <location>
        <begin position="171"/>
        <end position="173"/>
    </location>
</feature>
<feature type="strand" evidence="91">
    <location>
        <begin position="175"/>
        <end position="179"/>
    </location>
</feature>
<feature type="helix" evidence="91">
    <location>
        <begin position="183"/>
        <end position="187"/>
    </location>
</feature>
<feature type="helix" evidence="91">
    <location>
        <begin position="191"/>
        <end position="194"/>
    </location>
</feature>
<feature type="helix" evidence="91">
    <location>
        <begin position="199"/>
        <end position="202"/>
    </location>
</feature>
<feature type="helix" evidence="91">
    <location>
        <begin position="205"/>
        <end position="207"/>
    </location>
</feature>
<feature type="helix" evidence="91">
    <location>
        <begin position="208"/>
        <end position="215"/>
    </location>
</feature>
<feature type="helix" evidence="91">
    <location>
        <begin position="248"/>
        <end position="250"/>
    </location>
</feature>
<feature type="strand" evidence="91">
    <location>
        <begin position="251"/>
        <end position="259"/>
    </location>
</feature>
<feature type="strand" evidence="91">
    <location>
        <begin position="284"/>
        <end position="295"/>
    </location>
</feature>
<feature type="strand" evidence="91">
    <location>
        <begin position="319"/>
        <end position="326"/>
    </location>
</feature>
<feature type="strand" evidence="91">
    <location>
        <begin position="337"/>
        <end position="339"/>
    </location>
</feature>
<feature type="strand" evidence="91">
    <location>
        <begin position="345"/>
        <end position="350"/>
    </location>
</feature>
<feature type="strand" evidence="91">
    <location>
        <begin position="354"/>
        <end position="359"/>
    </location>
</feature>
<feature type="helix" evidence="91">
    <location>
        <begin position="362"/>
        <end position="367"/>
    </location>
</feature>
<feature type="helix" evidence="91">
    <location>
        <begin position="371"/>
        <end position="374"/>
    </location>
</feature>
<feature type="helix" evidence="91">
    <location>
        <begin position="379"/>
        <end position="381"/>
    </location>
</feature>
<feature type="helix" evidence="91">
    <location>
        <begin position="385"/>
        <end position="398"/>
    </location>
</feature>
<feature type="strand" evidence="91">
    <location>
        <begin position="410"/>
        <end position="413"/>
    </location>
</feature>
<feature type="strand" evidence="91">
    <location>
        <begin position="419"/>
        <end position="431"/>
    </location>
</feature>
<feature type="turn" evidence="91">
    <location>
        <begin position="432"/>
        <end position="435"/>
    </location>
</feature>
<feature type="strand" evidence="91">
    <location>
        <begin position="436"/>
        <end position="446"/>
    </location>
</feature>
<proteinExistence type="evidence at protein level"/>
<keyword id="KW-0002">3D-structure</keyword>
<keyword id="KW-0007">Acetylation</keyword>
<keyword id="KW-0010">Activator</keyword>
<keyword id="KW-0025">Alternative splicing</keyword>
<keyword id="KW-0090">Biological rhythms</keyword>
<keyword id="KW-0963">Cytoplasm</keyword>
<keyword id="KW-0238">DNA-binding</keyword>
<keyword id="KW-0325">Glycoprotein</keyword>
<keyword id="KW-1017">Isopeptide bond</keyword>
<keyword id="KW-0539">Nucleus</keyword>
<keyword id="KW-0597">Phosphoprotein</keyword>
<keyword id="KW-1185">Reference proteome</keyword>
<keyword id="KW-0677">Repeat</keyword>
<keyword id="KW-0804">Transcription</keyword>
<keyword id="KW-0805">Transcription regulation</keyword>
<keyword id="KW-0832">Ubl conjugation</keyword>
<name>BMAL1_MOUSE</name>
<organism>
    <name type="scientific">Mus musculus</name>
    <name type="common">Mouse</name>
    <dbReference type="NCBI Taxonomy" id="10090"/>
    <lineage>
        <taxon>Eukaryota</taxon>
        <taxon>Metazoa</taxon>
        <taxon>Chordata</taxon>
        <taxon>Craniata</taxon>
        <taxon>Vertebrata</taxon>
        <taxon>Euteleostomi</taxon>
        <taxon>Mammalia</taxon>
        <taxon>Eutheria</taxon>
        <taxon>Euarchontoglires</taxon>
        <taxon>Glires</taxon>
        <taxon>Rodentia</taxon>
        <taxon>Myomorpha</taxon>
        <taxon>Muroidea</taxon>
        <taxon>Muridae</taxon>
        <taxon>Murinae</taxon>
        <taxon>Mus</taxon>
        <taxon>Mus</taxon>
    </lineage>
</organism>
<dbReference type="EMBL" id="AB012601">
    <property type="protein sequence ID" value="BAA76414.1"/>
    <property type="molecule type" value="mRNA"/>
</dbReference>
<dbReference type="EMBL" id="AB015203">
    <property type="protein sequence ID" value="BAA81898.1"/>
    <property type="molecule type" value="mRNA"/>
</dbReference>
<dbReference type="EMBL" id="AB012602">
    <property type="protein sequence ID" value="BAA76415.1"/>
    <property type="molecule type" value="mRNA"/>
</dbReference>
<dbReference type="EMBL" id="AB014494">
    <property type="protein sequence ID" value="BAA32208.1"/>
    <property type="molecule type" value="mRNA"/>
</dbReference>
<dbReference type="EMBL" id="BC025973">
    <property type="protein sequence ID" value="AAH25973.1"/>
    <property type="molecule type" value="mRNA"/>
</dbReference>
<dbReference type="EMBL" id="BC011080">
    <property type="protein sequence ID" value="AAH11080.1"/>
    <property type="molecule type" value="mRNA"/>
</dbReference>
<dbReference type="CCDS" id="CCDS40092.1">
    <molecule id="Q9WTL8-4"/>
</dbReference>
<dbReference type="CCDS" id="CCDS85390.1">
    <molecule id="Q9WTL8-3"/>
</dbReference>
<dbReference type="PIR" id="JE0270">
    <property type="entry name" value="JE0270"/>
</dbReference>
<dbReference type="RefSeq" id="NP_001229977.1">
    <molecule id="Q9WTL8-3"/>
    <property type="nucleotide sequence ID" value="NM_001243048.2"/>
</dbReference>
<dbReference type="RefSeq" id="NP_001343999.1">
    <molecule id="Q9WTL8-2"/>
    <property type="nucleotide sequence ID" value="NM_001357070.2"/>
</dbReference>
<dbReference type="RefSeq" id="NP_001355341.1">
    <molecule id="Q9WTL8-1"/>
    <property type="nucleotide sequence ID" value="NM_001368412.1"/>
</dbReference>
<dbReference type="RefSeq" id="NP_001398908.1">
    <molecule id="Q9WTL8-4"/>
    <property type="nucleotide sequence ID" value="NM_001411979.1"/>
</dbReference>
<dbReference type="RefSeq" id="NP_001398909.1">
    <molecule id="Q9WTL8-4"/>
    <property type="nucleotide sequence ID" value="NM_001411980.1"/>
</dbReference>
<dbReference type="RefSeq" id="NP_001398910.1">
    <molecule id="Q9WTL8-2"/>
    <property type="nucleotide sequence ID" value="NM_001411981.1"/>
</dbReference>
<dbReference type="RefSeq" id="NP_031515.1">
    <molecule id="Q9WTL8-4"/>
    <property type="nucleotide sequence ID" value="NM_007489.5"/>
</dbReference>
<dbReference type="RefSeq" id="XP_006507314.1">
    <property type="nucleotide sequence ID" value="XM_006507251.2"/>
</dbReference>
<dbReference type="RefSeq" id="XP_017177438.1">
    <property type="nucleotide sequence ID" value="XM_017321949.1"/>
</dbReference>
<dbReference type="RefSeq" id="XP_017177439.1">
    <molecule id="Q9WTL8-2"/>
    <property type="nucleotide sequence ID" value="XM_017321950.2"/>
</dbReference>
<dbReference type="PDB" id="4F3L">
    <property type="method" value="X-ray"/>
    <property type="resolution" value="2.27 A"/>
    <property type="chains" value="B=69-453"/>
</dbReference>
<dbReference type="PDB" id="8OSJ">
    <property type="method" value="EM"/>
    <property type="resolution" value="6.20 A"/>
    <property type="chains" value="N=69-447"/>
</dbReference>
<dbReference type="PDB" id="8OSK">
    <property type="method" value="EM"/>
    <property type="resolution" value="3.60 A"/>
    <property type="chains" value="N=69-447"/>
</dbReference>
<dbReference type="PDB" id="8OSL">
    <property type="method" value="EM"/>
    <property type="resolution" value="4.90 A"/>
    <property type="chains" value="N/P=69-447"/>
</dbReference>
<dbReference type="PDB" id="8VHG">
    <property type="method" value="EM"/>
    <property type="resolution" value="3.60 A"/>
    <property type="chains" value="B=75-494"/>
</dbReference>
<dbReference type="PDBsum" id="4F3L"/>
<dbReference type="PDBsum" id="8OSJ"/>
<dbReference type="PDBsum" id="8OSK"/>
<dbReference type="PDBsum" id="8OSL"/>
<dbReference type="PDBsum" id="8VHG"/>
<dbReference type="EMDB" id="EMD-17155"/>
<dbReference type="EMDB" id="EMD-17157"/>
<dbReference type="EMDB" id="EMD-17160"/>
<dbReference type="EMDB" id="EMD-43237"/>
<dbReference type="SASBDB" id="Q9WTL8"/>
<dbReference type="SMR" id="Q9WTL8"/>
<dbReference type="BioGRID" id="198207">
    <property type="interactions" value="20"/>
</dbReference>
<dbReference type="ComplexPortal" id="CPX-3225">
    <property type="entry name" value="CLOCK-BMAL1 transcription complex"/>
</dbReference>
<dbReference type="CORUM" id="Q9WTL8"/>
<dbReference type="DIP" id="DIP-43977N"/>
<dbReference type="FunCoup" id="Q9WTL8">
    <property type="interactions" value="2363"/>
</dbReference>
<dbReference type="IntAct" id="Q9WTL8">
    <property type="interactions" value="32"/>
</dbReference>
<dbReference type="MINT" id="Q9WTL8"/>
<dbReference type="STRING" id="10090.ENSMUSP00000147989"/>
<dbReference type="GlyGen" id="Q9WTL8">
    <property type="glycosylation" value="1 site, 1 O-linked glycan (1 site)"/>
</dbReference>
<dbReference type="iPTMnet" id="Q9WTL8"/>
<dbReference type="PhosphoSitePlus" id="Q9WTL8"/>
<dbReference type="PaxDb" id="10090-ENSMUSP00000046235"/>
<dbReference type="ProteomicsDB" id="265307">
    <molecule id="Q9WTL8-1"/>
</dbReference>
<dbReference type="ProteomicsDB" id="265308">
    <molecule id="Q9WTL8-2"/>
</dbReference>
<dbReference type="ProteomicsDB" id="265309">
    <molecule id="Q9WTL8-3"/>
</dbReference>
<dbReference type="ProteomicsDB" id="265310">
    <molecule id="Q9WTL8-4"/>
</dbReference>
<dbReference type="ProteomicsDB" id="265311">
    <molecule id="Q9WTL8-5"/>
</dbReference>
<dbReference type="Antibodypedia" id="11861">
    <property type="antibodies" value="569 antibodies from 45 providers"/>
</dbReference>
<dbReference type="DNASU" id="11865"/>
<dbReference type="Ensembl" id="ENSMUST00000047321.9">
    <molecule id="Q9WTL8-4"/>
    <property type="protein sequence ID" value="ENSMUSP00000046235.8"/>
    <property type="gene ID" value="ENSMUSG00000055116.9"/>
</dbReference>
<dbReference type="Ensembl" id="ENSMUST00000210074.2">
    <molecule id="Q9WTL8-3"/>
    <property type="protein sequence ID" value="ENSMUSP00000147764.2"/>
    <property type="gene ID" value="ENSMUSG00000055116.9"/>
</dbReference>
<dbReference type="Ensembl" id="ENSMUST00000210238.2">
    <molecule id="Q9WTL8-4"/>
    <property type="protein sequence ID" value="ENSMUSP00000147989.2"/>
    <property type="gene ID" value="ENSMUSG00000055116.9"/>
</dbReference>
<dbReference type="GeneID" id="11865"/>
<dbReference type="KEGG" id="mmu:11865"/>
<dbReference type="UCSC" id="uc009jhf.2">
    <molecule id="Q9WTL8-3"/>
    <property type="organism name" value="mouse"/>
</dbReference>
<dbReference type="UCSC" id="uc009jhi.2">
    <molecule id="Q9WTL8-2"/>
    <property type="organism name" value="mouse"/>
</dbReference>
<dbReference type="UCSC" id="uc009jhj.2">
    <molecule id="Q9WTL8-1"/>
    <property type="organism name" value="mouse"/>
</dbReference>
<dbReference type="AGR" id="MGI:1096381"/>
<dbReference type="CTD" id="406"/>
<dbReference type="MGI" id="MGI:1096381">
    <property type="gene designation" value="Bmal1"/>
</dbReference>
<dbReference type="VEuPathDB" id="HostDB:ENSMUSG00000055116"/>
<dbReference type="eggNOG" id="KOG3561">
    <property type="taxonomic scope" value="Eukaryota"/>
</dbReference>
<dbReference type="GeneTree" id="ENSGT00940000157523"/>
<dbReference type="HOGENOM" id="CLU_011864_2_2_1"/>
<dbReference type="InParanoid" id="Q9WTL8"/>
<dbReference type="OMA" id="PPTMVPD"/>
<dbReference type="PhylomeDB" id="Q9WTL8"/>
<dbReference type="TreeFam" id="TF319983"/>
<dbReference type="Reactome" id="R-MMU-9768919">
    <property type="pathway name" value="NPAS4 regulates expression of target genes"/>
</dbReference>
<dbReference type="BioGRID-ORCS" id="11865">
    <property type="hits" value="4 hits in 83 CRISPR screens"/>
</dbReference>
<dbReference type="ChiTaRS" id="Arntl">
    <property type="organism name" value="mouse"/>
</dbReference>
<dbReference type="EvolutionaryTrace" id="Q9WTL8"/>
<dbReference type="PRO" id="PR:Q9WTL8"/>
<dbReference type="Proteomes" id="UP000000589">
    <property type="component" value="Chromosome 7"/>
</dbReference>
<dbReference type="RNAct" id="Q9WTL8">
    <property type="molecule type" value="protein"/>
</dbReference>
<dbReference type="Bgee" id="ENSMUSG00000055116">
    <property type="expression patterns" value="Expressed in animal zygote and 244 other cell types or tissues"/>
</dbReference>
<dbReference type="ExpressionAtlas" id="Q9WTL8">
    <property type="expression patterns" value="baseline and differential"/>
</dbReference>
<dbReference type="GO" id="GO:0033391">
    <property type="term" value="C:chromatoid body"/>
    <property type="evidence" value="ECO:0000314"/>
    <property type="project" value="UniProtKB"/>
</dbReference>
<dbReference type="GO" id="GO:1990513">
    <property type="term" value="C:CLOCK-BMAL transcription complex"/>
    <property type="evidence" value="ECO:0000353"/>
    <property type="project" value="ComplexPortal"/>
</dbReference>
<dbReference type="GO" id="GO:0005737">
    <property type="term" value="C:cytoplasm"/>
    <property type="evidence" value="ECO:0000314"/>
    <property type="project" value="UniProtKB"/>
</dbReference>
<dbReference type="GO" id="GO:0005829">
    <property type="term" value="C:cytosol"/>
    <property type="evidence" value="ECO:0000304"/>
    <property type="project" value="Reactome"/>
</dbReference>
<dbReference type="GO" id="GO:0016604">
    <property type="term" value="C:nuclear body"/>
    <property type="evidence" value="ECO:0000314"/>
    <property type="project" value="MGI"/>
</dbReference>
<dbReference type="GO" id="GO:0005654">
    <property type="term" value="C:nucleoplasm"/>
    <property type="evidence" value="ECO:0000304"/>
    <property type="project" value="Reactome"/>
</dbReference>
<dbReference type="GO" id="GO:0005634">
    <property type="term" value="C:nucleus"/>
    <property type="evidence" value="ECO:0000314"/>
    <property type="project" value="UniProtKB"/>
</dbReference>
<dbReference type="GO" id="GO:0016605">
    <property type="term" value="C:PML body"/>
    <property type="evidence" value="ECO:0007669"/>
    <property type="project" value="UniProtKB-SubCell"/>
</dbReference>
<dbReference type="GO" id="GO:0005667">
    <property type="term" value="C:transcription regulator complex"/>
    <property type="evidence" value="ECO:0000314"/>
    <property type="project" value="UniProtKB"/>
</dbReference>
<dbReference type="GO" id="GO:0043425">
    <property type="term" value="F:bHLH transcription factor binding"/>
    <property type="evidence" value="ECO:0000353"/>
    <property type="project" value="BHF-UCL"/>
</dbReference>
<dbReference type="GO" id="GO:0003677">
    <property type="term" value="F:DNA binding"/>
    <property type="evidence" value="ECO:0000314"/>
    <property type="project" value="UniProtKB"/>
</dbReference>
<dbReference type="GO" id="GO:0001228">
    <property type="term" value="F:DNA-binding transcription activator activity, RNA polymerase II-specific"/>
    <property type="evidence" value="ECO:0000314"/>
    <property type="project" value="BHF-UCL"/>
</dbReference>
<dbReference type="GO" id="GO:0003700">
    <property type="term" value="F:DNA-binding transcription factor activity"/>
    <property type="evidence" value="ECO:0000314"/>
    <property type="project" value="UniProtKB"/>
</dbReference>
<dbReference type="GO" id="GO:0000981">
    <property type="term" value="F:DNA-binding transcription factor activity, RNA polymerase II-specific"/>
    <property type="evidence" value="ECO:0000314"/>
    <property type="project" value="BHF-UCL"/>
</dbReference>
<dbReference type="GO" id="GO:0070888">
    <property type="term" value="F:E-box binding"/>
    <property type="evidence" value="ECO:0000314"/>
    <property type="project" value="UniProtKB"/>
</dbReference>
<dbReference type="GO" id="GO:0046982">
    <property type="term" value="F:protein heterodimerization activity"/>
    <property type="evidence" value="ECO:0000353"/>
    <property type="project" value="BHF-UCL"/>
</dbReference>
<dbReference type="GO" id="GO:0000978">
    <property type="term" value="F:RNA polymerase II cis-regulatory region sequence-specific DNA binding"/>
    <property type="evidence" value="ECO:0000314"/>
    <property type="project" value="UniProtKB"/>
</dbReference>
<dbReference type="GO" id="GO:0043565">
    <property type="term" value="F:sequence-specific DNA binding"/>
    <property type="evidence" value="ECO:0000314"/>
    <property type="project" value="UniProtKB"/>
</dbReference>
<dbReference type="GO" id="GO:0000976">
    <property type="term" value="F:transcription cis-regulatory region binding"/>
    <property type="evidence" value="ECO:0000314"/>
    <property type="project" value="UniProtKB"/>
</dbReference>
<dbReference type="GO" id="GO:0003712">
    <property type="term" value="F:transcription coregulator activity"/>
    <property type="evidence" value="ECO:0000314"/>
    <property type="project" value="UniProtKB"/>
</dbReference>
<dbReference type="GO" id="GO:0006914">
    <property type="term" value="P:autophagy"/>
    <property type="evidence" value="ECO:0000315"/>
    <property type="project" value="MGI"/>
</dbReference>
<dbReference type="GO" id="GO:0032922">
    <property type="term" value="P:circadian regulation of gene expression"/>
    <property type="evidence" value="ECO:0000314"/>
    <property type="project" value="UniProtKB"/>
</dbReference>
<dbReference type="GO" id="GO:0007623">
    <property type="term" value="P:circadian rhythm"/>
    <property type="evidence" value="ECO:0000314"/>
    <property type="project" value="UniProtKB"/>
</dbReference>
<dbReference type="GO" id="GO:0097009">
    <property type="term" value="P:energy homeostasis"/>
    <property type="evidence" value="ECO:0000314"/>
    <property type="project" value="UniProtKB"/>
</dbReference>
<dbReference type="GO" id="GO:0010467">
    <property type="term" value="P:gene expression"/>
    <property type="evidence" value="ECO:0000315"/>
    <property type="project" value="MGI"/>
</dbReference>
<dbReference type="GO" id="GO:0060137">
    <property type="term" value="P:maternal process involved in parturition"/>
    <property type="evidence" value="ECO:0000315"/>
    <property type="project" value="CACAO"/>
</dbReference>
<dbReference type="GO" id="GO:0120163">
    <property type="term" value="P:negative regulation of cold-induced thermogenesis"/>
    <property type="evidence" value="ECO:0000315"/>
    <property type="project" value="YuBioLab"/>
</dbReference>
<dbReference type="GO" id="GO:0045892">
    <property type="term" value="P:negative regulation of DNA-templated transcription"/>
    <property type="evidence" value="ECO:0000314"/>
    <property type="project" value="UniProtKB"/>
</dbReference>
<dbReference type="GO" id="GO:0045599">
    <property type="term" value="P:negative regulation of fat cell differentiation"/>
    <property type="evidence" value="ECO:0000315"/>
    <property type="project" value="UniProtKB"/>
</dbReference>
<dbReference type="GO" id="GO:2000323">
    <property type="term" value="P:negative regulation of nuclear receptor-mediated glucocorticoid signaling pathway"/>
    <property type="evidence" value="ECO:0000315"/>
    <property type="project" value="UniProtKB"/>
</dbReference>
<dbReference type="GO" id="GO:0032007">
    <property type="term" value="P:negative regulation of TOR signaling"/>
    <property type="evidence" value="ECO:0000315"/>
    <property type="project" value="UniProtKB"/>
</dbReference>
<dbReference type="GO" id="GO:0090403">
    <property type="term" value="P:oxidative stress-induced premature senescence"/>
    <property type="evidence" value="ECO:0000315"/>
    <property type="project" value="UniProtKB"/>
</dbReference>
<dbReference type="GO" id="GO:0090263">
    <property type="term" value="P:positive regulation of canonical Wnt signaling pathway"/>
    <property type="evidence" value="ECO:0000315"/>
    <property type="project" value="UniProtKB"/>
</dbReference>
<dbReference type="GO" id="GO:0042753">
    <property type="term" value="P:positive regulation of circadian rhythm"/>
    <property type="evidence" value="ECO:0000315"/>
    <property type="project" value="UniProtKB"/>
</dbReference>
<dbReference type="GO" id="GO:0045893">
    <property type="term" value="P:positive regulation of DNA-templated transcription"/>
    <property type="evidence" value="ECO:0000314"/>
    <property type="project" value="UniProtKB"/>
</dbReference>
<dbReference type="GO" id="GO:1901985">
    <property type="term" value="P:positive regulation of protein acetylation"/>
    <property type="evidence" value="ECO:0000315"/>
    <property type="project" value="UniProtKB"/>
</dbReference>
<dbReference type="GO" id="GO:2001016">
    <property type="term" value="P:positive regulation of skeletal muscle cell differentiation"/>
    <property type="evidence" value="ECO:0000315"/>
    <property type="project" value="UniProtKB"/>
</dbReference>
<dbReference type="GO" id="GO:0045944">
    <property type="term" value="P:positive regulation of transcription by RNA polymerase II"/>
    <property type="evidence" value="ECO:0000314"/>
    <property type="project" value="BHF-UCL"/>
</dbReference>
<dbReference type="GO" id="GO:0043161">
    <property type="term" value="P:proteasome-mediated ubiquitin-dependent protein catabolic process"/>
    <property type="evidence" value="ECO:0000315"/>
    <property type="project" value="UniProtKB"/>
</dbReference>
<dbReference type="GO" id="GO:0006606">
    <property type="term" value="P:protein import into nucleus"/>
    <property type="evidence" value="ECO:0000314"/>
    <property type="project" value="MGI"/>
</dbReference>
<dbReference type="GO" id="GO:0051726">
    <property type="term" value="P:regulation of cell cycle"/>
    <property type="evidence" value="ECO:0000315"/>
    <property type="project" value="UniProtKB"/>
</dbReference>
<dbReference type="GO" id="GO:2000772">
    <property type="term" value="P:regulation of cellular senescence"/>
    <property type="evidence" value="ECO:0000315"/>
    <property type="project" value="UniProtKB"/>
</dbReference>
<dbReference type="GO" id="GO:0006355">
    <property type="term" value="P:regulation of DNA-templated transcription"/>
    <property type="evidence" value="ECO:0000314"/>
    <property type="project" value="UniProtKB"/>
</dbReference>
<dbReference type="GO" id="GO:0042634">
    <property type="term" value="P:regulation of hair cycle"/>
    <property type="evidence" value="ECO:0000250"/>
    <property type="project" value="UniProtKB"/>
</dbReference>
<dbReference type="GO" id="GO:0050796">
    <property type="term" value="P:regulation of insulin secretion"/>
    <property type="evidence" value="ECO:0000315"/>
    <property type="project" value="UniProtKB"/>
</dbReference>
<dbReference type="GO" id="GO:0050767">
    <property type="term" value="P:regulation of neurogenesis"/>
    <property type="evidence" value="ECO:0000315"/>
    <property type="project" value="UniProtKB"/>
</dbReference>
<dbReference type="GO" id="GO:0042176">
    <property type="term" value="P:regulation of protein catabolic process"/>
    <property type="evidence" value="ECO:0000314"/>
    <property type="project" value="MGI"/>
</dbReference>
<dbReference type="GO" id="GO:2000074">
    <property type="term" value="P:regulation of type B pancreatic cell development"/>
    <property type="evidence" value="ECO:0000315"/>
    <property type="project" value="UniProtKB"/>
</dbReference>
<dbReference type="GO" id="GO:0051775">
    <property type="term" value="P:response to redox state"/>
    <property type="evidence" value="ECO:0000314"/>
    <property type="project" value="UniProtKB"/>
</dbReference>
<dbReference type="GO" id="GO:0007283">
    <property type="term" value="P:spermatogenesis"/>
    <property type="evidence" value="ECO:0000315"/>
    <property type="project" value="UniProtKB"/>
</dbReference>
<dbReference type="CDD" id="cd11438">
    <property type="entry name" value="bHLH-PAS_ARNTL_PASD3"/>
    <property type="match status" value="1"/>
</dbReference>
<dbReference type="CDD" id="cd00130">
    <property type="entry name" value="PAS"/>
    <property type="match status" value="2"/>
</dbReference>
<dbReference type="FunFam" id="4.10.280.10:FF:000018">
    <property type="entry name" value="Aryl hydrocarbon receptor nuclear translocator-like protein 1"/>
    <property type="match status" value="1"/>
</dbReference>
<dbReference type="FunFam" id="3.30.450.20:FF:000006">
    <property type="entry name" value="aryl hydrocarbon receptor nuclear translocator-like protein 1"/>
    <property type="match status" value="1"/>
</dbReference>
<dbReference type="FunFam" id="3.30.450.20:FF:000010">
    <property type="entry name" value="Aryl hydrocarbon receptor nuclear translocator-like, isoform CRA_b"/>
    <property type="match status" value="1"/>
</dbReference>
<dbReference type="Gene3D" id="4.10.280.10">
    <property type="entry name" value="Helix-loop-helix DNA-binding domain"/>
    <property type="match status" value="1"/>
</dbReference>
<dbReference type="Gene3D" id="3.30.450.20">
    <property type="entry name" value="PAS domain"/>
    <property type="match status" value="2"/>
</dbReference>
<dbReference type="InterPro" id="IPR011598">
    <property type="entry name" value="bHLH_dom"/>
</dbReference>
<dbReference type="InterPro" id="IPR050933">
    <property type="entry name" value="Circadian_TF"/>
</dbReference>
<dbReference type="InterPro" id="IPR036638">
    <property type="entry name" value="HLH_DNA-bd_sf"/>
</dbReference>
<dbReference type="InterPro" id="IPR001067">
    <property type="entry name" value="Nuc_translocat"/>
</dbReference>
<dbReference type="InterPro" id="IPR001610">
    <property type="entry name" value="PAC"/>
</dbReference>
<dbReference type="InterPro" id="IPR000014">
    <property type="entry name" value="PAS"/>
</dbReference>
<dbReference type="InterPro" id="IPR035965">
    <property type="entry name" value="PAS-like_dom_sf"/>
</dbReference>
<dbReference type="InterPro" id="IPR013767">
    <property type="entry name" value="PAS_fold"/>
</dbReference>
<dbReference type="NCBIfam" id="TIGR00229">
    <property type="entry name" value="sensory_box"/>
    <property type="match status" value="1"/>
</dbReference>
<dbReference type="PANTHER" id="PTHR23042">
    <property type="entry name" value="CIRCADIAN PROTEIN CLOCK/ARNT/BMAL/PAS"/>
    <property type="match status" value="1"/>
</dbReference>
<dbReference type="Pfam" id="PF00010">
    <property type="entry name" value="HLH"/>
    <property type="match status" value="1"/>
</dbReference>
<dbReference type="Pfam" id="PF00989">
    <property type="entry name" value="PAS"/>
    <property type="match status" value="1"/>
</dbReference>
<dbReference type="Pfam" id="PF14598">
    <property type="entry name" value="PAS_11"/>
    <property type="match status" value="1"/>
</dbReference>
<dbReference type="PRINTS" id="PR00785">
    <property type="entry name" value="NCTRNSLOCATR"/>
</dbReference>
<dbReference type="SMART" id="SM00353">
    <property type="entry name" value="HLH"/>
    <property type="match status" value="1"/>
</dbReference>
<dbReference type="SMART" id="SM00086">
    <property type="entry name" value="PAC"/>
    <property type="match status" value="1"/>
</dbReference>
<dbReference type="SMART" id="SM00091">
    <property type="entry name" value="PAS"/>
    <property type="match status" value="2"/>
</dbReference>
<dbReference type="SUPFAM" id="SSF47459">
    <property type="entry name" value="HLH, helix-loop-helix DNA-binding domain"/>
    <property type="match status" value="1"/>
</dbReference>
<dbReference type="SUPFAM" id="SSF55785">
    <property type="entry name" value="PYP-like sensor domain (PAS domain)"/>
    <property type="match status" value="2"/>
</dbReference>
<dbReference type="PROSITE" id="PS50888">
    <property type="entry name" value="BHLH"/>
    <property type="match status" value="1"/>
</dbReference>
<dbReference type="PROSITE" id="PS50112">
    <property type="entry name" value="PAS"/>
    <property type="match status" value="2"/>
</dbReference>
<sequence length="632" mass="69452">MADQRMDISSTISDFMSPGPTDLLSGSLGTSGVDCNRKRKGSATDYQLDDFAFEESMDTDKDDPHGRLEYAEHQGRIKNAREAHSQIEKRRRDKMNSFIDELASLVPTCNAMSRKLDKLTVLRMAVQHMKTLRGATNPYTEANYKPTFLSDDELKHLILRAADGFLFVVGCDRGKILFVSESVFKILNYSQNDLIGQSLFDYLHPKDIAKVKEQLSSSDTAPRERLIDAKTGLPVKTDITPGPSRLCSGARRSFFCRMKCNRPSVKVEDKDFASTCSKKKDRKSFCTIHSTGYLKSWPPTKMGLDEDNEPDNEGCNLSCLVAIGRLHSHMVPQPANGEIRVKSMEYVSRHAIDGKFVFVDQRATAILAYLPQELLGTSCYEYFHQDDIGHLAECHRQVLQTREKITTNCYKFKIKDGSFITLRSRWFSFMNPWTKEVEYIVSTNTVVLANVLEGGDPTFPQLTAPPHSMDSMLPSGEGGPKRTHPTVPGIPGGTRAGAGKIGRMIAEEIMEIHRIRGSSPSSCGSSPLNITSTPPPDASSPGGKKILNGGTPDIPSTGLLPGQAQETPGYPYSDSSSILGENPHIGIDMIDNDQGSSSPSNDEAAMAVIMSLLEADAGLGGPVDFSDLPWPL</sequence>
<protein>
    <recommendedName>
        <fullName>Basic helix-loop-helix ARNT-like protein 1</fullName>
    </recommendedName>
    <alternativeName>
        <fullName>Arnt3</fullName>
    </alternativeName>
    <alternativeName>
        <fullName>Aryl hydrocarbon receptor nuclear translocator-like protein 1</fullName>
    </alternativeName>
    <alternativeName>
        <fullName>Brain and muscle ARNT-like 1</fullName>
    </alternativeName>
</protein>
<evidence type="ECO:0000250" key="1">
    <source>
        <dbReference type="UniProtKB" id="O00327"/>
    </source>
</evidence>
<evidence type="ECO:0000255" key="2">
    <source>
        <dbReference type="PROSITE-ProRule" id="PRU00140"/>
    </source>
</evidence>
<evidence type="ECO:0000255" key="3">
    <source>
        <dbReference type="PROSITE-ProRule" id="PRU00981"/>
    </source>
</evidence>
<evidence type="ECO:0000256" key="4">
    <source>
        <dbReference type="SAM" id="MobiDB-lite"/>
    </source>
</evidence>
<evidence type="ECO:0000269" key="5">
    <source>
    </source>
</evidence>
<evidence type="ECO:0000269" key="6">
    <source>
    </source>
</evidence>
<evidence type="ECO:0000269" key="7">
    <source>
    </source>
</evidence>
<evidence type="ECO:0000269" key="8">
    <source>
    </source>
</evidence>
<evidence type="ECO:0000269" key="9">
    <source>
    </source>
</evidence>
<evidence type="ECO:0000269" key="10">
    <source>
    </source>
</evidence>
<evidence type="ECO:0000269" key="11">
    <source>
    </source>
</evidence>
<evidence type="ECO:0000269" key="12">
    <source>
    </source>
</evidence>
<evidence type="ECO:0000269" key="13">
    <source>
    </source>
</evidence>
<evidence type="ECO:0000269" key="14">
    <source>
    </source>
</evidence>
<evidence type="ECO:0000269" key="15">
    <source>
    </source>
</evidence>
<evidence type="ECO:0000269" key="16">
    <source>
    </source>
</evidence>
<evidence type="ECO:0000269" key="17">
    <source>
    </source>
</evidence>
<evidence type="ECO:0000269" key="18">
    <source>
    </source>
</evidence>
<evidence type="ECO:0000269" key="19">
    <source>
    </source>
</evidence>
<evidence type="ECO:0000269" key="20">
    <source>
    </source>
</evidence>
<evidence type="ECO:0000269" key="21">
    <source>
    </source>
</evidence>
<evidence type="ECO:0000269" key="22">
    <source>
    </source>
</evidence>
<evidence type="ECO:0000269" key="23">
    <source>
    </source>
</evidence>
<evidence type="ECO:0000269" key="24">
    <source>
    </source>
</evidence>
<evidence type="ECO:0000269" key="25">
    <source>
    </source>
</evidence>
<evidence type="ECO:0000269" key="26">
    <source>
    </source>
</evidence>
<evidence type="ECO:0000269" key="27">
    <source>
    </source>
</evidence>
<evidence type="ECO:0000269" key="28">
    <source>
    </source>
</evidence>
<evidence type="ECO:0000269" key="29">
    <source>
    </source>
</evidence>
<evidence type="ECO:0000269" key="30">
    <source>
    </source>
</evidence>
<evidence type="ECO:0000269" key="31">
    <source>
    </source>
</evidence>
<evidence type="ECO:0000269" key="32">
    <source>
    </source>
</evidence>
<evidence type="ECO:0000269" key="33">
    <source>
    </source>
</evidence>
<evidence type="ECO:0000269" key="34">
    <source>
    </source>
</evidence>
<evidence type="ECO:0000269" key="35">
    <source>
    </source>
</evidence>
<evidence type="ECO:0000269" key="36">
    <source>
    </source>
</evidence>
<evidence type="ECO:0000269" key="37">
    <source>
    </source>
</evidence>
<evidence type="ECO:0000269" key="38">
    <source>
    </source>
</evidence>
<evidence type="ECO:0000269" key="39">
    <source>
    </source>
</evidence>
<evidence type="ECO:0000269" key="40">
    <source>
    </source>
</evidence>
<evidence type="ECO:0000269" key="41">
    <source>
    </source>
</evidence>
<evidence type="ECO:0000269" key="42">
    <source>
    </source>
</evidence>
<evidence type="ECO:0000269" key="43">
    <source>
    </source>
</evidence>
<evidence type="ECO:0000269" key="44">
    <source>
    </source>
</evidence>
<evidence type="ECO:0000269" key="45">
    <source>
    </source>
</evidence>
<evidence type="ECO:0000269" key="46">
    <source>
    </source>
</evidence>
<evidence type="ECO:0000269" key="47">
    <source>
    </source>
</evidence>
<evidence type="ECO:0000269" key="48">
    <source>
    </source>
</evidence>
<evidence type="ECO:0000269" key="49">
    <source>
    </source>
</evidence>
<evidence type="ECO:0000269" key="50">
    <source>
    </source>
</evidence>
<evidence type="ECO:0000269" key="51">
    <source>
    </source>
</evidence>
<evidence type="ECO:0000269" key="52">
    <source>
    </source>
</evidence>
<evidence type="ECO:0000269" key="53">
    <source>
    </source>
</evidence>
<evidence type="ECO:0000269" key="54">
    <source>
    </source>
</evidence>
<evidence type="ECO:0000269" key="55">
    <source>
    </source>
</evidence>
<evidence type="ECO:0000269" key="56">
    <source>
    </source>
</evidence>
<evidence type="ECO:0000269" key="57">
    <source>
    </source>
</evidence>
<evidence type="ECO:0000269" key="58">
    <source>
    </source>
</evidence>
<evidence type="ECO:0000269" key="59">
    <source>
    </source>
</evidence>
<evidence type="ECO:0000269" key="60">
    <source>
    </source>
</evidence>
<evidence type="ECO:0000269" key="61">
    <source>
    </source>
</evidence>
<evidence type="ECO:0000269" key="62">
    <source>
    </source>
</evidence>
<evidence type="ECO:0000269" key="63">
    <source>
    </source>
</evidence>
<evidence type="ECO:0000269" key="64">
    <source>
    </source>
</evidence>
<evidence type="ECO:0000269" key="65">
    <source>
    </source>
</evidence>
<evidence type="ECO:0000269" key="66">
    <source>
    </source>
</evidence>
<evidence type="ECO:0000269" key="67">
    <source>
    </source>
</evidence>
<evidence type="ECO:0000269" key="68">
    <source>
    </source>
</evidence>
<evidence type="ECO:0000269" key="69">
    <source>
    </source>
</evidence>
<evidence type="ECO:0000269" key="70">
    <source>
    </source>
</evidence>
<evidence type="ECO:0000269" key="71">
    <source>
    </source>
</evidence>
<evidence type="ECO:0000269" key="72">
    <source>
    </source>
</evidence>
<evidence type="ECO:0000269" key="73">
    <source>
    </source>
</evidence>
<evidence type="ECO:0000269" key="74">
    <source>
    </source>
</evidence>
<evidence type="ECO:0000269" key="75">
    <source>
    </source>
</evidence>
<evidence type="ECO:0000269" key="76">
    <source>
    </source>
</evidence>
<evidence type="ECO:0000269" key="77">
    <source>
    </source>
</evidence>
<evidence type="ECO:0000269" key="78">
    <source>
    </source>
</evidence>
<evidence type="ECO:0000269" key="79">
    <source>
    </source>
</evidence>
<evidence type="ECO:0000269" key="80">
    <source>
    </source>
</evidence>
<evidence type="ECO:0000269" key="81">
    <source>
    </source>
</evidence>
<evidence type="ECO:0000269" key="82">
    <source>
    </source>
</evidence>
<evidence type="ECO:0000269" key="83">
    <source>
    </source>
</evidence>
<evidence type="ECO:0000269" key="84">
    <source>
    </source>
</evidence>
<evidence type="ECO:0000269" key="85">
    <source>
    </source>
</evidence>
<evidence type="ECO:0000303" key="86">
    <source>
    </source>
</evidence>
<evidence type="ECO:0000303" key="87">
    <source>
    </source>
</evidence>
<evidence type="ECO:0000303" key="88">
    <source>
    </source>
</evidence>
<evidence type="ECO:0000305" key="89"/>
<evidence type="ECO:0000312" key="90">
    <source>
        <dbReference type="MGI" id="MGI:1096381"/>
    </source>
</evidence>
<evidence type="ECO:0007829" key="91">
    <source>
        <dbReference type="PDB" id="4F3L"/>
    </source>
</evidence>